<comment type="function">
    <molecule>Isoform 2</molecule>
    <text evidence="3 11 14 15">F-actin-binding protein which plays a role in cross-linking actin to other cytoskeletal proteins and also binds to microtubules (PubMed:15265687, PubMed:20937854). Plays an important role in ERBB2-dependent stabilization of microtubules at the cell cortex (PubMed:20937854). Acts as a positive regulator of Wnt receptor signaling pathway and is involved in the translocation of AXIN1 and its associated complex (composed of APC, CTNNB1 and GSK3B) from the cytoplasm to the cell membrane (By similarity). Has actin-regulated ATPase activity and is essential for controlling focal adhesions (FAs) assembly and dynamics (By similarity). Interaction with CAMSAP3 at the minus ends of non-centrosomal microtubules tethers microtubules minus-ends to actin filaments, regulating focal adhesion size and cell migration (PubMed:27693509). May play role in delivery of transport vesicles containing GPI-linked proteins from the trans-Golgi network through its interaction with GOLGA4 (PubMed:15265687). Plays a key role in wound healing and epidermal cell migration (By similarity). Required for efficient upward migration of bulge cells in response to wounding and this function is primarily rooted in its ability to coordinate microtubule dynamics and polarize hair follicle stem cells (By similarity). As a regulator of actin and microtubule arrangement and stabilization, it plays an essential role in neurite outgrowth, branching and spine formation during brain development (By similarity).</text>
</comment>
<comment type="subunit">
    <text evidence="3 11 15 16">Isoform 2: Interacts with MAPRE1, CLASP1, CLASP2, AXIN1 and LRP6 (By similarity). Isoform 2: Found in a complex composed of MACF1, APC, AXIN1, CTNNB1 and GSK3B (By similarity). Isoform 2: Interacts with GOLGA4 (PubMed:15265687). Isoform 2: Interacts with CAMSAP3 (PubMed:27693509, PubMed:27802168).</text>
</comment>
<comment type="interaction">
    <interactant intactId="EBI-522925">
        <id>Q9UPN3</id>
    </interactant>
    <interactant intactId="EBI-529989">
        <id>Q9NRI5</id>
        <label>DISC1</label>
    </interactant>
    <organismsDiffer>false</organismsDiffer>
    <experiments>4</experiments>
</comment>
<comment type="interaction">
    <interactant intactId="EBI-522925">
        <id>Q9UPN3</id>
    </interactant>
    <interactant intactId="EBI-15881455">
        <id>Q9NRI5-1</id>
        <label>DISC1</label>
    </interactant>
    <organismsDiffer>false</organismsDiffer>
    <experiments>3</experiments>
</comment>
<comment type="subcellular location">
    <molecule>Isoform 2</molecule>
    <subcellularLocation>
        <location evidence="11 15">Cytoplasm</location>
        <location evidence="11 15">Cytoskeleton</location>
    </subcellularLocation>
    <subcellularLocation>
        <location evidence="11">Cytoplasm</location>
    </subcellularLocation>
    <subcellularLocation>
        <location evidence="11">Golgi apparatus</location>
    </subcellularLocation>
    <subcellularLocation>
        <location evidence="14">Cell membrane</location>
    </subcellularLocation>
    <subcellularLocation>
        <location evidence="14">Cell projection</location>
        <location evidence="14">Ruffle membrane</location>
    </subcellularLocation>
    <text evidence="3 14 15">The phosphorylated form is found in the cytoplasm while the non-phosphorylated form associates with the microtubules (By similarity). Localizes to the tips of microtubules (PubMed:27693509). Associated with the minus-end of microtubules via interaction with CAMSAP3 (PubMed:27693509). APC controls its localization to the cell membrane which is critical for its function in microtubule stabilization (PubMed:20937854).</text>
</comment>
<comment type="subcellular location">
    <molecule>Isoform 1</molecule>
    <subcellularLocation>
        <location evidence="12">Cytoplasm</location>
    </subcellularLocation>
    <subcellularLocation>
        <location evidence="12">Golgi apparatus</location>
    </subcellularLocation>
    <text evidence="12">Localizes to the tips of microtubules.</text>
</comment>
<comment type="alternative products">
    <event type="alternative splicing"/>
    <isoform>
        <id>Q9UPN3-1</id>
        <name>1</name>
        <name>Macf1b</name>
        <sequence type="displayed"/>
    </isoform>
    <isoform>
        <id>Q9UPN3-2</id>
        <name>2</name>
        <name>Macf1a</name>
        <sequence type="described" ref="VSP_041391 VSP_041393"/>
    </isoform>
    <isoform>
        <id>Q9UPN3-3</id>
        <name>3</name>
        <sequence type="described" ref="VSP_041390 VSP_041391 VSP_041392 VSP_041393"/>
    </isoform>
    <isoform>
        <id>Q9UPN3-4</id>
        <name>5</name>
        <sequence type="described" ref="VSP_041391 VSP_041392"/>
    </isoform>
    <isoform>
        <id>Q9UPN3-5</id>
        <name>4</name>
        <sequence type="described" ref="VSP_043626 VSP_041393 VSP_043627"/>
    </isoform>
    <isoform>
        <id>O94854-3</id>
        <name>6</name>
        <sequence type="external"/>
    </isoform>
    <isoform>
        <id>O94854-4</id>
        <name>7</name>
        <sequence type="external"/>
    </isoform>
</comment>
<comment type="tissue specificity">
    <text evidence="10 12">Isoform 2: Ubiquitously expressed. Isoform 1: Expressed in cell lines NCI-H460, A-549 and HaCaT. Isoform 4: Expressed in heart, lung, pituitary and placenta, not found in brain, kidney, liver, pancreas or skeletal muscle.</text>
</comment>
<comment type="domain">
    <text evidence="3">The C-terminal tail is required for phosphorylation by GSK3B and for microtubule-binding.</text>
</comment>
<comment type="PTM">
    <text evidence="3">Phosphorylated on serine residues in the C-terminal tail by GSK3B. Phosphorylation inhibits microtubule-binding and this plays a critical role in bulge stem cell migration and skin wound repair. Wnt-signaling can repress phosphorylation (By similarity).</text>
</comment>
<comment type="disease" evidence="17">
    <disease id="DI-05481">
        <name>Lissencephaly 9 with complex brainstem malformation</name>
        <acronym>LIS9</acronym>
        <description>A form of lissencephaly, a disorder of cortical development characterized by agyria or pachygyria and disorganization of the clear neuronal lamination of normal six-layered cortex. LIS9 is an autosomal dominant form clinically characterized by global developmental delay apparent since infancy, impaired intellectual development with poor or absent speech, and sometimes abnormal or involuntary movements. Brain imaging shows malformation of the brainstem, in addition to pachygyria and lissencephaly.</description>
        <dbReference type="MIM" id="618325"/>
    </disease>
    <text>The disease is caused by variants affecting the gene represented in this entry.</text>
</comment>
<comment type="similarity">
    <text evidence="24">Belongs to the plakin or cytolinker family.</text>
</comment>
<comment type="sequence caution" evidence="24">
    <conflict type="frameshift">
        <sequence resource="EMBL-CDS" id="BAA83821"/>
    </conflict>
</comment>
<gene>
    <name evidence="25" type="primary">MACF1</name>
    <name type="synonym">ABP620</name>
    <name evidence="22" type="synonym">ACF7</name>
    <name type="synonym">KIAA0465</name>
    <name type="synonym">KIAA0754</name>
    <name type="synonym">KIAA1251</name>
</gene>
<sequence>MSSSDEETLSERSCRSERSCRSERSYRSERSGSLSPCPPGDTLPWNLPLHEQKKRKSQDSVLDPAERAVVRVADERDRVQKKTFTKWVNKHLMKVRKHINDLYEDLRDGHNLISLLEVLSGIKLPREKGRMRFHRLQNVQIALDFLKQRQVKLVNIRNDDITDGNPKLTLGLIWTIILHFQISDIYISGESGDMSAKEKLLLWTQKVTAGYTGIKCTNFSSCWSDGKMFNALIHRYRPDLVDMERVQIQSNRENLEQAFEVAERLGVTRLLDAEDVDVPSPDEKSVITYVSSIYDAFPKVPEGGEGISATEVDSRWQEYQSRVDSLIPWIKQHTILMSDKTFPQNPVELKALYNQYIHFKETEILAKEREKGRIEELYKLLEVWIEFGRIKLPQGYHPNDVEEEWGKLIIEMLEREKSLRPAVERLELLLQIANKIQNGALNCEEKLTLAKNTLQADAAHLESGQPVQCESDVIMYIQECEGLIRQLQVDLQILRDENYYQLEELAFRVMRLQDELVTLRLECTNLYRKGHFTSLELVPPSTLTTTHLKAEPLTKATHSSSTSWFRKPMTRAELVAISSSEDEGNLRFVYELLSWVEEMQMKLERAEWGNDLPSVELQLETQQHIHTSVEELGSSVKEARLYEGKMSQNFHTSYAETLGKLETQYCKLKETSSFRMRHLQSLHKFVSRATAELIWLNEKEEEELAYDWSDNNSNISAKRNYFSELTMELEEKQDVFRSLQDTAELLSLENHPAKQTVEAYSAAVQSQLQWMKQLCLCVEQHVKENTAYFQFFSDARELESFLRNLQDSIKRKYSCDHNTSLSRLEDLLQDSMDEKEQLIQSKSSVASLVGRSKTIVQLKPRSPDHVLKNTISVKAVCDYRQIEITICKNDECVLEDNSQRTKWKVISPTGNEAMVPSVCFLIPPPNKDAIEMASRVEQSYQKVMALWHQLHVNTKSLISWNYLRKDLDLVQTWNLEKLRSSAPGECHQIMKNLQAHYEDFLQDSRDSVLFSVADRLRLEEEVEACKARFQHLMKSMENEDKEETVAKMYISELKNIRLRLEEYEQRVVKRIQSLASSRTDRDAWQDNALRIAEQEHTQEDLQQLRSDLDAVSMKCDSFLHQSPSSSSVPTLRSELNLLVEKMDHVYGLSTVYLNKLKTVDVIVRSIQDAELLVKGYEIKLSQEEVVLADLSALEAHWSTLRHWLSDVKDKNSVFSVLDEEIAKAKVVAEQMSRLTPERNLDLERYQEKGSQLQERWHRVIAQLEIRQSELESIQEVLGDYRACHGTLIKWIEETTAQQEMMKPGQAEDSRVLSEQLSQQTALFAEIERNQTKLDQCQKFSQQYSTIVKDYELQLMTYKAFVESQQKSPGKRRRMLSSSDAITQEFMDLRTRYTALVTLTTQHVKYISDALRRLEEEEKVVEEEKQEHVEKVKELLGWVSTLARNTQGKATSSETKESTDIEKAILEQQVLSEELTTKKEQVSEAIKTSQIFLAKHGHKLSEKEKKQISEQLNALNKAYHDLCDGSANQLQQLQSQLAHQTEQKECRAVAGVIDLGTVEIFPIFKAMQKGLLDQDTGLVLLESQVIMSGLIAPETGENLSLEEGIARNLINPQMYQQLRELQDALALISRLTESRGPLSVVEAIEKRIISETVGLKILEAHLATGGFSLSPSENCINLEEAFHQGLISAWLHSVLESYLRTSKNLIDPNTAEKIGLLDLMQRCIVHQESGFKLLPVKQLAGGMVSLKSGRKVSIFRAVQEGLIDRQVTVRLLEAQLFAGGIVDPRTGHRLTVEEAVRHNLIDQDMACAILIRQLQTGGIIDTVTGQRLTIDEAVSNDLVAAKIALVILESLWSFMGLLWPESGEILPITDALEQGIVSTELAHKILSNRQHIKALFLPATTEILSWKKAIESGILDRDLANNLKSICIPDVMPHMQLADSAEQNINPGAAVLPCSKSHPKATASQSENLLFQLMTHSYINVQNGQRLLLLDKELMETLTSRDEYQTSPPKVVEIGHQRQKTPEGLQESANVKISGTFSSGWTVRLPEFQFSSQNKEYPDREDCTTEKGKKTTVETEDSSVENPEQDLFVEQKERNPNIDALKVINKVKLEVQRQLIGTQREDQTAVSVRENASRGHLLTIPPAEAEGVPLVVDKDVFSVETPKKEHQPLRNTSFTCQNEQAHTLETEYIHDETGGSHIKPQSKKLQVQVKKTLGIKLELKSETDGNVHPLDKKEMLKKTFLAKDDHKESQEAQNIAGGSMMMSEKTDEEDSGREIFLSCSHPLELLEEATLNVLSAQLLDGGIFHEQTGQKLLLNEAISRGIVPSHTAVKLMEKLNMFQGFFDSQTCESLTTEEVINEGLMDEKLLHNVLMADKAISGVLDPRTQTLCSVKDAVTVGLLDKETATRILERQVVTGGIIDLKRGKKVSVTLASTLGLVDVADQPELINLEKASKGRDAEKTVRERLISLQMETTGLIDPDSKAPLTVVQSIDRGLLEREEAVRLLTKQVVDGGIIHHISGMRLSVDNAFRHGLIGEDLAEKLKRVENLNIHQIFNPETKENISLPKAIKLDLITSDLKREIQEVQAFTGNFVDLISGQRLTLAEAKKEGLLTNEAVLSPGMMHGIVDPENCRIVPYSELVKKCKIDIESGQRYLEVIPFSDIKDGVSDKVLTLSQAIQLGKVDFASTLKVLEAQANTGGIIDTATGKRLTLASALEEKLVDENMVRIIASHQVLNGGIVDIFSDQRVTLVEAIEKRLISPELANMIQIDSSEFSDHRAQIEKQEGIEVCALQNEFLGKDMLIACNQTAEMSCNKVEESERLFQVENQSAQEKVKVRVSDGEQAKKSREISLKEFGCKDQRKPRMSSDAKEFISIINPHNLKGKSLGQVSLTHPYSECDFKLKEVARNNMGNDTNEEQEKAVTKIEIISHMKQSTSCLDSEEIRENQGEVILEVQETYCETSGKLPSEQVLQQPMNARVKSKREKREVIVEESIRTCKPAFLSEEKLYQETAIRDEHDSHIKSQPREMTSSEKGKEADTEMGFSITFKIEESSSQVVPQGISVKHLDALTLFSSKQANEGKVNNLSLCLTLKPEENLSREIACGAQSEPFPCMTPRPEGLHYQESDGKAQVTGPSQISKTDKSFQGTTRQETNYQDSWVTSKTKETKHQISSSNECKEKSYQEVSFDPARGLKLEEITVSRPDSKEVRYLEFSDRKDLHHQGSKSDDKLCGTLKSEIATQELTGEKFLEMANPNVAGLEAGSIEDIVTQRGSRVLGSFLPEKLFKGVSQKENTGQQNAIISPTVLETSEEKTVSLTVCSAVKTEKTPQEKLRESPGSEQTPFMTAPEGKGNGGVNPEPFRATQNVFTRQLCLEHDEKLVSYLSLLRNIEMRTKQIQPLELNLAELQDLLCQAKVLERELKDLTTLVSQELECVNQIIISQPQEVPAQLLKALEKDAKNLQKSLSSVSDTWNSRLLHFQNAVEIEKTKVLNQHTQLEGRLQDLRAWVGNKNLILNSKGSNSEIDVDSLNLCLQQYEDLKQPMAERKAQLDALAFDIQFFISEHAQDLSPQQNRQMLRLLNELQRSFQDILEQTAAQVDALQGHLQQMEQEALVKTLQKQQNTCHQQLEDLCSWVGQAERALAGHQGRTTQQDLSALQKNQSDLKDLQDDIQNRATSFATVVKDIEGFMEENQTKLSPRELTALREKLHQAKEQYEALQEETRVAQKELEEAVTSALQQETEKSKAAKELAENKKKIDALLDWVTSVGSSGGQLLTNLPGMEQLSGASLEKGALDTTDGYMGVNQAPEKLDKQCEMMKARHQELLSQQQNFILATQSAQAFLDQHGHNLTPEEQQMLQQKLGELKEQYSTSLAQSEAELKQVQTLQDELQKFLQDHKEFESWLERSEKELENMHKGGSSPETLPSLLKRQGSFSEDVISHKGDLRFVTISGQKVLDMENSFKEGKEPSEIGNLVKDKLKDATERYTALHSKCTRLGSHLNMLLGQYHQFQNSADSLQAWMQACEANVEKLLSDTVASDPGVLQEQLATTKQLQEELAEHQVPVEKLQKVARDIMEIEGEPAPDHRHVQETTDSILSHFQSLSYSLAERSSLLQKAIAQSQSVQESLESLLQSIGEVEQNLEGKQVSSLSSGVIQEALATNMKLKQDIARQKSSLEATREMVTRFMETADSTTAAVLQGKLAEVSQRFEQLCLQQQEKESSLKKLLPQAEMFEHLSGKLQQFMENKSRMLASGNQPDQDITHFFQQIQELNLEMEDQQENLDTLEHLVTELSSCGFALDLCQHQDRVQNLRKDFTELQKTVKEREKDASSCQEQLDEFRKLVRTFQKWLKETEGSIPPTETSMSAKELEKQIEHLKSLLDDWASKGTLVEEINCKGTSLENLIMEITAPDSQGKTGSILPSVGSSVGSVNGYHTCKDLTEIQCDMSDVNLKYEKLGGVLHERQESLQAILNRMEEVHKEANSVLQWLESKEEVLKSMDAMSSPTKTETVKAQAESNKAFLAELEQNSPKIQKVKEALAGLLVTYPNSQEAENWKKIQEELNSRWERATEVTVARQRQLEESASHLACFQAAESQLRPWLMEKELMMGVLGPLSIDPNMLNAQKQQVQFMLKEFEARRQQHEQLNEAAQGILTGPGDVSLSTSQVQKELQSINQKWVELTDKLNSRSSQIDQAIVKSTQYQELLQDLSEKVRAVGQRLSVQSAISTQPEAVKQQLEETSEIRSDLEQLDHEVKEAQTLCDELSVLIGEQYLKDELKKRLETVALPLQGLEDLAADRINRLQAALASTQQFQQMFDELRTWLDDKQSQQAKNCPISAKLERLQSQLQENEEFQKSLNQHSGSYEVIVAEGESLLLSVPPGEEKRTLQNQLVELKNHWEELSKKTADRQSRLKDCMQKAQKYQWHVEDLVPWIEDCKAKMSELRVTLDPVQLESSLLRSKAMLNEVEKRRSLLEILNSAADILINSSEADEDGIRDEKAGINQNMDAVTEELQAKTGSLEEMTQRLREFQESFKNIEKKVEGAKHQLEIFDALGSQACSNKNLEKLRAQQEVLQALEPQVDYLRNFTQGLVEDAPDGSDASQLLHQAEVAQQEFLEVKQRVNSGCVMMENKLEGIGQFHCRVREMFSQLADLDDELDGMGAIGRDTDSLQSQIEDVRLFLNKIHVLKLDIEASEAECRHMLEEEGTLDLLGLKRELEALNKQCGKLTERGKARQEQLELTLGRVEDFYRKLKGLNDATTAAEEAEALQWVVGTEVEIINQQLADFKMFQKEQVDPLQMKLQQVNGLGQGLIQSAGKDCDVQGLEHDMEEINARWNTLNKKVAQRIAQLQEALLHCGKFQDALEPLLSWLADTEELIANQKPPSAEYKVVKAQIQEQKLLQRLLDDRKATVDMLQAEGGRIAQSAELADREKITGQLESLESRWTELLSKAAARQKQLEDILVLAKQFHETAEPISDFLSVTEKKLANSEPVGTQTAKIQQQIIRHKALNEEIVNRKKNVDQAIKNGQALLKQTTGEEVLLIQEKLDGIKTRYADITVTSSKALRTLEQARQLATKFQSTYEELTGWLREVEEELATSGGQSPTGEQIPQFQQRQKELKKEVMEHRLVLDTVNEVSRALLELVPWRAREGLDKLVSDANEQYKLVSDTIGQRVDEIDAAIQRSQQYEQAADAELAWVAETKRKLMALGPIRLEQDQTTAQLQVQKAFSIDIIRHKDSMDELFSHRSEIFGTCGEEQKTVLQEKTESLIQQYEAISLLNSERYARLERAQVLVNQFWETYEELSPWIEETRALIAQLPSPAIDHEQLRQQQEEMRQLRESIAEHKPHIDKLLKIGPQLKELNPEEGEMVEEKYQKAENMYAQIKEEVRQRALALDEAVSQSTQITEFHDKIEPMLETLENLSSRLRMPPLIPAEVDKIRECISDNKSATVELEKLQPSFEALKRRGEELIGRSQGADKDLAAKEIQDKLDQMVFFWEDIKARAEEREIKFLDVLELAEKFWYDMAALLTTIKDTQDIVHDLESPGIDPSIIKQQVEAAETIKEETDGLHEELEFIRILGADLIFACGETEKPEVRKSIDEMNNAWENLNKTWKERLEKLEDAMQAAVQYQDTLQAMFDWLDNTVIKLCTMPPVGTDLNTVKDQLNEMKEFKVEVYQQQIEMEKLNHQGELMLKKATDETDRDIIREPLTELKHLWENLGEKIAHRQHKLEGALLALGQFQHALEELMSWLTHTEELLDAQRPISGDPKVIEVELAKHHVLKNDVLAHQATVETVNKAGNELLESSAGDDASSLRSRLEAMNQCWESVLQKTEEREQQLQSTLQQAQGFHSEIEDFLLELTRMESQLSASKPTGGLPETAREQLDTHMELYSQLKAKEETYNQLLDKGRLMLLSRDDSGSGSKTEQSVALLEQKWHVVSSKMEERKSKLEEALNLATEFQNSLQEFINWLTLAEQSLNIASPPSLILNTVLSQIEEHKVFANEVNAHRDQIIELDQTGNQLKFLSQKQDVVLIKNLLVSVQSRWEKVVQRSIERGRSLDDARKRAKQFHEAWKKLIDWLEDAESHLDSELEISNDPDKIKLQLSKHKEFQKTLGGKQPVYDTTIRTGRALKEKTLLPEDSQKLDNFLGEVRDKWDTVCGKSVERQHKLEEALLFSGQFMDALQALVDWLYKVEPQLAEDQPVHGDLDLVMNLMDAHKVFQKELGKRTGTVQVLKRSGRELIENSRDDTTWVKGQLQELSTRWDTVCKLSVSKQSRLEQALKQAEVFRDTVHMLLEWLSEAEQTLRFRGALPDDTEALQSLIDTHKEFMKKVEEKRVDVNSAVAMGEVILAVCHPDCITTIKHWITIIRARFEEVLTWAKQHQQRLETALSELVANAELLEELLAWIQWAETTLIQRDQEPIPQNIDRVKALIAEHQTFMEEMTRKQPDVDRVTKTYKRKNIEPTHAPFIEKSRSGGRKSLSQPTPPPMPILSQSEAKNPRINQLSARWQQVWLLALERQRKLNDALDRLEELKEFANFDFDVWRKKYMRWMNHKKSRVMDFFRRIDKDQDGKITRQEFIDGILASKFPTTKLEMTAVADIFDRDGDGYIDYYEFVAALHPNKDAYRPTTDADKIEDEVTRQVAQCKCAKRFQVEQIGENKYRFGDSQQLRLVRILRSTVMVRVGGGWMALDEFLVKNDPCRARGRTNIELREKFILPEGASQGMTPFRSRGRRSKPSSRAASPTRSSSSASQSNHSCTSMPSSPATPASGTKVIPSSGSKLKRPTPTFHSSRTSLAGDTSNSSSPASTGAKTNRADPKKSASRPGSRAGSRAGSRASSRRGSDASDFDLLETQSACSDTSESSAAGGQGNSRRGLNKPSKIPTMSKKTTTASPRTPGPKR</sequence>
<proteinExistence type="evidence at protein level"/>
<feature type="chain" id="PRO_0000073449" description="Microtubule-actin cross-linking factor 1, isoforms 1/2/3/4/5">
    <location>
        <begin position="1"/>
        <end position="7388"/>
    </location>
</feature>
<feature type="domain" description="Calponin-homology (CH) 1" evidence="4">
    <location>
        <begin position="78"/>
        <end position="181"/>
    </location>
</feature>
<feature type="repeat" description="LRR 1">
    <location>
        <begin position="148"/>
        <end position="171"/>
    </location>
</feature>
<feature type="domain" description="Calponin-homology (CH) 2" evidence="4">
    <location>
        <begin position="194"/>
        <end position="298"/>
    </location>
</feature>
<feature type="repeat" description="LRR 2">
    <location>
        <begin position="240"/>
        <end position="264"/>
    </location>
</feature>
<feature type="repeat" description="LRR 3">
    <location>
        <begin position="377"/>
        <end position="399"/>
    </location>
</feature>
<feature type="repeat" description="LRR 4">
    <location>
        <begin position="441"/>
        <end position="464"/>
    </location>
</feature>
<feature type="domain" description="SH3" evidence="5">
    <location>
        <begin position="868"/>
        <end position="925"/>
    </location>
</feature>
<feature type="repeat" description="LRR 5">
    <location>
        <begin position="1050"/>
        <end position="1073"/>
    </location>
</feature>
<feature type="repeat" description="LRR 6">
    <location>
        <begin position="1128"/>
        <end position="1154"/>
    </location>
</feature>
<feature type="repeat" description="LRR 7">
    <location>
        <begin position="1187"/>
        <end position="1210"/>
    </location>
</feature>
<feature type="repeat" description="LRR 8">
    <location>
        <begin position="1257"/>
        <end position="1282"/>
    </location>
</feature>
<feature type="repeat" description="Plectin 1">
    <location>
        <begin position="1577"/>
        <end position="1621"/>
    </location>
</feature>
<feature type="repeat" description="Plectin 2">
    <location>
        <begin position="1654"/>
        <end position="1696"/>
    </location>
</feature>
<feature type="repeat" description="Plectin 3">
    <location>
        <begin position="1769"/>
        <end position="1809"/>
    </location>
</feature>
<feature type="repeat" description="Plectin 4">
    <location>
        <begin position="1811"/>
        <end position="1848"/>
    </location>
</feature>
<feature type="repeat" description="Plectin 5">
    <location>
        <begin position="1855"/>
        <end position="1886"/>
    </location>
</feature>
<feature type="repeat" description="Plectin 6">
    <location>
        <begin position="2290"/>
        <end position="2332"/>
    </location>
</feature>
<feature type="repeat" description="Plectin 7">
    <location>
        <begin position="2367"/>
        <end position="2410"/>
    </location>
</feature>
<feature type="repeat" description="Plectin 8">
    <location>
        <begin position="2411"/>
        <end position="2437"/>
    </location>
</feature>
<feature type="repeat" description="Plectin 9">
    <location>
        <begin position="2501"/>
        <end position="2543"/>
    </location>
</feature>
<feature type="repeat" description="Plectin 10">
    <location>
        <begin position="2581"/>
        <end position="2612"/>
    </location>
</feature>
<feature type="repeat" description="Plectin 11">
    <location>
        <begin position="2686"/>
        <end position="2730"/>
    </location>
</feature>
<feature type="repeat" description="LRR 9">
    <location>
        <begin position="3239"/>
        <end position="3262"/>
    </location>
</feature>
<feature type="repeat" description="LRR 10">
    <location>
        <begin position="3264"/>
        <end position="3283"/>
    </location>
</feature>
<feature type="repeat" description="LRR 11">
    <location>
        <begin position="3646"/>
        <end position="3669"/>
    </location>
</feature>
<feature type="repeat" description="LRR 12">
    <location>
        <begin position="3696"/>
        <end position="3720"/>
    </location>
</feature>
<feature type="repeat" description="Spectrin 1">
    <location>
        <begin position="3883"/>
        <end position="3957"/>
    </location>
</feature>
<feature type="repeat" description="LRR 13">
    <location>
        <begin position="3936"/>
        <end position="3958"/>
    </location>
</feature>
<feature type="repeat" description="Spectrin 2">
    <location>
        <begin position="4000"/>
        <end position="4108"/>
    </location>
</feature>
<feature type="repeat" description="LRR 14">
    <location>
        <begin position="4125"/>
        <end position="4150"/>
    </location>
</feature>
<feature type="repeat" description="LRR 15">
    <location>
        <begin position="4261"/>
        <end position="4287"/>
    </location>
</feature>
<feature type="repeat" description="Spectrin 3">
    <location>
        <begin position="4466"/>
        <end position="4574"/>
    </location>
</feature>
<feature type="repeat" description="LRR 16">
    <location>
        <begin position="4511"/>
        <end position="4534"/>
    </location>
</feature>
<feature type="repeat" description="LRR 17">
    <location>
        <begin position="4601"/>
        <end position="4624"/>
    </location>
</feature>
<feature type="repeat" description="LRR 18">
    <location>
        <begin position="4769"/>
        <end position="4792"/>
    </location>
</feature>
<feature type="repeat" description="Spectrin 4">
    <location>
        <begin position="4800"/>
        <end position="4904"/>
    </location>
</feature>
<feature type="repeat" description="Spectrin 5">
    <location>
        <begin position="4909"/>
        <end position="5012"/>
    </location>
</feature>
<feature type="repeat" description="LRR 19">
    <location>
        <begin position="5051"/>
        <end position="5076"/>
    </location>
</feature>
<feature type="repeat" description="LRR 20">
    <location>
        <begin position="5172"/>
        <end position="5194"/>
    </location>
</feature>
<feature type="repeat" description="Spectrin 6">
    <location>
        <begin position="5236"/>
        <end position="5341"/>
    </location>
</feature>
<feature type="repeat" description="LRR 21">
    <location>
        <begin position="5281"/>
        <end position="5304"/>
    </location>
</feature>
<feature type="repeat" description="Spectrin 7">
    <location>
        <begin position="5348"/>
        <end position="5450"/>
    </location>
</feature>
<feature type="repeat" description="Spectrin 8">
    <location>
        <begin position="5455"/>
        <end position="5557"/>
    </location>
</feature>
<feature type="repeat" description="LRR 22">
    <location>
        <begin position="5695"/>
        <end position="5719"/>
    </location>
</feature>
<feature type="repeat" description="Spectrin 9">
    <location>
        <begin position="5783"/>
        <end position="5885"/>
    </location>
</feature>
<feature type="repeat" description="LRR 23">
    <location>
        <begin position="5804"/>
        <end position="5828"/>
    </location>
</feature>
<feature type="repeat" description="Spectrin 10">
    <location>
        <begin position="6005"/>
        <end position="6110"/>
    </location>
</feature>
<feature type="repeat" description="Spectrin 11">
    <location>
        <begin position="6115"/>
        <end position="6219"/>
    </location>
</feature>
<feature type="repeat" description="Spectrin 12">
    <location>
        <begin position="6225"/>
        <end position="6328"/>
    </location>
</feature>
<feature type="repeat" description="Spectrin 13">
    <location>
        <begin position="6333"/>
        <end position="6439"/>
    </location>
</feature>
<feature type="repeat" description="Spectrin 14">
    <location>
        <begin position="6443"/>
        <end position="6547"/>
    </location>
</feature>
<feature type="repeat" description="LRR 24">
    <location>
        <begin position="6496"/>
        <end position="6519"/>
    </location>
</feature>
<feature type="repeat" description="Spectrin 15">
    <location>
        <begin position="6552"/>
        <end position="6658"/>
    </location>
</feature>
<feature type="repeat" description="Spectrin 16">
    <location>
        <begin position="6665"/>
        <end position="6766"/>
    </location>
</feature>
<feature type="repeat" description="Spectrin 17">
    <location>
        <begin position="6771"/>
        <end position="6874"/>
    </location>
</feature>
<feature type="domain" description="EF-hand 1" evidence="6">
    <location>
        <begin position="7041"/>
        <end position="7076"/>
    </location>
</feature>
<feature type="domain" description="EF-hand 2" evidence="6">
    <location>
        <begin position="7077"/>
        <end position="7112"/>
    </location>
</feature>
<feature type="domain" description="GAR" evidence="7">
    <location>
        <begin position="7117"/>
        <end position="7189"/>
    </location>
</feature>
<feature type="region of interest" description="Actin-binding">
    <location>
        <begin position="1"/>
        <end position="295"/>
    </location>
</feature>
<feature type="region of interest" description="Disordered" evidence="8">
    <location>
        <begin position="1"/>
        <end position="47"/>
    </location>
</feature>
<feature type="region of interest" description="Disordered" evidence="8">
    <location>
        <begin position="2051"/>
        <end position="2085"/>
    </location>
</feature>
<feature type="region of interest" description="Disordered" evidence="8">
    <location>
        <begin position="3013"/>
        <end position="3034"/>
    </location>
</feature>
<feature type="region of interest" description="Disordered" evidence="8">
    <location>
        <begin position="3104"/>
        <end position="3174"/>
    </location>
</feature>
<feature type="region of interest" description="Disordered" evidence="8">
    <location>
        <begin position="3321"/>
        <end position="3350"/>
    </location>
</feature>
<feature type="region of interest" description="Disordered" evidence="8">
    <location>
        <begin position="5583"/>
        <end position="5603"/>
    </location>
</feature>
<feature type="region of interest" description="Disordered" evidence="8">
    <location>
        <begin position="6951"/>
        <end position="6981"/>
    </location>
</feature>
<feature type="region of interest" description="C-terminal tail" evidence="1">
    <location>
        <begin position="7117"/>
        <end position="7388"/>
    </location>
</feature>
<feature type="region of interest" description="Disordered" evidence="8">
    <location>
        <begin position="7205"/>
        <end position="7388"/>
    </location>
</feature>
<feature type="region of interest" description="4 X 4 AA tandem repeats of [GS]-S-R-[AR]">
    <location>
        <begin position="7313"/>
        <end position="7328"/>
    </location>
</feature>
<feature type="compositionally biased region" description="Basic and acidic residues" evidence="8">
    <location>
        <begin position="9"/>
        <end position="30"/>
    </location>
</feature>
<feature type="compositionally biased region" description="Basic and acidic residues" evidence="8">
    <location>
        <begin position="2055"/>
        <end position="2072"/>
    </location>
</feature>
<feature type="compositionally biased region" description="Basic and acidic residues" evidence="8">
    <location>
        <begin position="3115"/>
        <end position="3124"/>
    </location>
</feature>
<feature type="compositionally biased region" description="Polar residues" evidence="8">
    <location>
        <begin position="3129"/>
        <end position="3158"/>
    </location>
</feature>
<feature type="compositionally biased region" description="Basic and acidic residues" evidence="8">
    <location>
        <begin position="3321"/>
        <end position="3332"/>
    </location>
</feature>
<feature type="compositionally biased region" description="Polar residues" evidence="8">
    <location>
        <begin position="5588"/>
        <end position="5603"/>
    </location>
</feature>
<feature type="compositionally biased region" description="Low complexity" evidence="8">
    <location>
        <begin position="7225"/>
        <end position="7259"/>
    </location>
</feature>
<feature type="compositionally biased region" description="Polar residues" evidence="8">
    <location>
        <begin position="7275"/>
        <end position="7299"/>
    </location>
</feature>
<feature type="compositionally biased region" description="Low complexity" evidence="8">
    <location>
        <begin position="7310"/>
        <end position="7324"/>
    </location>
</feature>
<feature type="compositionally biased region" description="Polar residues" evidence="8">
    <location>
        <begin position="7339"/>
        <end position="7361"/>
    </location>
</feature>
<feature type="binding site" evidence="6">
    <location>
        <position position="7054"/>
    </location>
    <ligand>
        <name>Ca(2+)</name>
        <dbReference type="ChEBI" id="CHEBI:29108"/>
        <label>1</label>
    </ligand>
</feature>
<feature type="binding site" evidence="6">
    <location>
        <position position="7056"/>
    </location>
    <ligand>
        <name>Ca(2+)</name>
        <dbReference type="ChEBI" id="CHEBI:29108"/>
        <label>1</label>
    </ligand>
</feature>
<feature type="binding site" evidence="6">
    <location>
        <position position="7058"/>
    </location>
    <ligand>
        <name>Ca(2+)</name>
        <dbReference type="ChEBI" id="CHEBI:29108"/>
        <label>1</label>
    </ligand>
</feature>
<feature type="binding site" evidence="6">
    <location>
        <position position="7060"/>
    </location>
    <ligand>
        <name>Ca(2+)</name>
        <dbReference type="ChEBI" id="CHEBI:29108"/>
        <label>1</label>
    </ligand>
</feature>
<feature type="binding site" evidence="6">
    <location>
        <position position="7065"/>
    </location>
    <ligand>
        <name>Ca(2+)</name>
        <dbReference type="ChEBI" id="CHEBI:29108"/>
        <label>1</label>
    </ligand>
</feature>
<feature type="binding site" evidence="6">
    <location>
        <position position="7090"/>
    </location>
    <ligand>
        <name>Ca(2+)</name>
        <dbReference type="ChEBI" id="CHEBI:29108"/>
        <label>2</label>
    </ligand>
</feature>
<feature type="binding site" evidence="6">
    <location>
        <position position="7092"/>
    </location>
    <ligand>
        <name>Ca(2+)</name>
        <dbReference type="ChEBI" id="CHEBI:29108"/>
        <label>2</label>
    </ligand>
</feature>
<feature type="binding site" evidence="6">
    <location>
        <position position="7094"/>
    </location>
    <ligand>
        <name>Ca(2+)</name>
        <dbReference type="ChEBI" id="CHEBI:29108"/>
        <label>2</label>
    </ligand>
</feature>
<feature type="binding site" evidence="6">
    <location>
        <position position="7096"/>
    </location>
    <ligand>
        <name>Ca(2+)</name>
        <dbReference type="ChEBI" id="CHEBI:29108"/>
        <label>2</label>
    </ligand>
</feature>
<feature type="binding site" evidence="6">
    <location>
        <position position="7101"/>
    </location>
    <ligand>
        <name>Ca(2+)</name>
        <dbReference type="ChEBI" id="CHEBI:29108"/>
        <label>2</label>
    </ligand>
</feature>
<feature type="modified residue" description="Phosphoserine" evidence="2">
    <location>
        <position position="4"/>
    </location>
</feature>
<feature type="modified residue" description="Phosphoserine" evidence="3">
    <location>
        <position position="35"/>
    </location>
</feature>
<feature type="modified residue" description="Phosphoserine" evidence="3">
    <location>
        <position position="57"/>
    </location>
</feature>
<feature type="modified residue" description="Phosphoserine" evidence="30 31 33">
    <location>
        <position position="280"/>
    </location>
</feature>
<feature type="modified residue" description="Phosphoserine" evidence="33">
    <location>
        <position position="814"/>
    </location>
</feature>
<feature type="modified residue" description="Phosphoserine" evidence="32">
    <location>
        <position position="1122"/>
    </location>
</feature>
<feature type="modified residue" description="Phosphoserine" evidence="32">
    <location>
        <position position="1367"/>
    </location>
</feature>
<feature type="modified residue" description="Phosphoserine" evidence="27 29 30 31 32 33">
    <location>
        <position position="1376"/>
    </location>
</feature>
<feature type="modified residue" description="Phosphoserine" evidence="32">
    <location>
        <position position="2006"/>
    </location>
</feature>
<feature type="modified residue" description="Phosphoserine" evidence="32">
    <location>
        <position position="2051"/>
    </location>
</feature>
<feature type="modified residue" description="Phosphoserine" evidence="3">
    <location>
        <position position="2077"/>
    </location>
</feature>
<feature type="modified residue" description="Phosphoserine" evidence="3">
    <location>
        <position position="3122"/>
    </location>
</feature>
<feature type="modified residue" description="Phosphoserine" evidence="32">
    <location>
        <position position="3331"/>
    </location>
</feature>
<feature type="modified residue" description="Phosphoserine" evidence="27 30 32 33">
    <location>
        <position position="3927"/>
    </location>
</feature>
<feature type="modified residue" description="Phosphoserine" evidence="27">
    <location>
        <position position="4495"/>
    </location>
</feature>
<feature type="modified residue" description="Phosphoserine" evidence="27 31 32">
    <location>
        <position position="4496"/>
    </location>
</feature>
<feature type="modified residue" description="Phosphoserine" evidence="26 29 30 31 32">
    <location>
        <position position="4521"/>
    </location>
</feature>
<feature type="modified residue" description="Phosphoserine" evidence="32">
    <location>
        <position position="4836"/>
    </location>
</feature>
<feature type="modified residue" description="Phosphoserine" evidence="31">
    <location>
        <position position="4962"/>
    </location>
</feature>
<feature type="modified residue" description="Phosphothreonine" evidence="3">
    <location>
        <position position="5435"/>
    </location>
</feature>
<feature type="modified residue" description="Phosphoserine" evidence="32 33">
    <location>
        <position position="5808"/>
    </location>
</feature>
<feature type="modified residue" description="Phosphoserine" evidence="33">
    <location>
        <position position="6032"/>
    </location>
</feature>
<feature type="modified residue" description="N6-acetyllysine" evidence="28">
    <location>
        <position position="6210"/>
    </location>
</feature>
<feature type="modified residue" description="Phosphoserine" evidence="27 32">
    <location>
        <position position="6967"/>
    </location>
</feature>
<feature type="modified residue" description="Phosphothreonine" evidence="27">
    <location>
        <position position="7254"/>
    </location>
</feature>
<feature type="modified residue" description="Phosphoserine" evidence="32">
    <location>
        <position position="7279"/>
    </location>
</feature>
<feature type="modified residue" description="Phosphoserine" evidence="27">
    <location>
        <position position="7292"/>
    </location>
</feature>
<feature type="modified residue" description="Phosphoserine" evidence="27 29 32 33">
    <location>
        <position position="7330"/>
    </location>
</feature>
<feature type="modified residue" description="Phosphoserine" evidence="3">
    <location>
        <position position="7333"/>
    </location>
</feature>
<feature type="splice variant" id="VSP_043626" description="In isoform 4." evidence="21">
    <location>
        <begin position="1"/>
        <end position="1565"/>
    </location>
</feature>
<feature type="splice variant" id="VSP_041390" description="In isoform 3." evidence="19">
    <original>MSSSDEETLSERSCRSERSCRSERSYRSERSGSLSPCPPGDTLPWNLPLHEQKKRKSQDSVLDPAERAVVRV</original>
    <variation>MFPVLWAGIPGRDVGSLQPLPPGFKQFCTSASRVAVI</variation>
    <location>
        <begin position="1"/>
        <end position="72"/>
    </location>
</feature>
<feature type="splice variant" id="VSP_041391" description="In isoform 2, isoform 3 and isoform 5." evidence="18 19 20 23">
    <location>
        <begin position="1543"/>
        <end position="3609"/>
    </location>
</feature>
<feature type="splice variant" id="VSP_041392" description="In isoform 3 and isoform 5." evidence="19 23">
    <location>
        <begin position="4410"/>
        <end position="4430"/>
    </location>
</feature>
<feature type="splice variant" id="VSP_041393" description="In isoform 2, isoform 3 and isoform 4." evidence="18 19 20 21">
    <original>K</original>
    <variation>KALEEDIENHATDVHQAVKIGQSLSSLTSPAEQGVLSEKIDSLQARYSEIQDRCCRKAALLDQALSNARLFGEDEVEVLNWLAEVEDKLSSVFVKDFKQDVLHRQHADHL</variation>
    <location>
        <position position="5497"/>
    </location>
</feature>
<feature type="splice variant" id="VSP_043627" description="In isoform 4." evidence="21">
    <original>R</original>
    <variation>RFFLGNQ</variation>
    <location>
        <position position="7150"/>
    </location>
</feature>
<feature type="sequence variant" id="VAR_035451" description="In a breast cancer sample; somatic mutation." evidence="13">
    <original>E</original>
    <variation>V</variation>
    <location>
        <position position="302"/>
    </location>
</feature>
<feature type="sequence variant" id="VAR_048625" description="In dbSNP:rs2296172." evidence="9">
    <original>M</original>
    <variation>V</variation>
    <location>
        <position position="4357"/>
    </location>
</feature>
<feature type="sequence variant" id="VAR_048626" description="In dbSNP:rs682351.">
    <original>K</original>
    <variation>R</variation>
    <location>
        <position position="6201"/>
    </location>
</feature>
<feature type="sequence variant" id="VAR_048627" description="In dbSNP:rs587404.">
    <original>A</original>
    <variation>T</variation>
    <location>
        <position position="6308"/>
    </location>
</feature>
<feature type="sequence variant" id="VAR_035452" description="In a breast cancer sample; somatic mutation." evidence="13">
    <original>E</original>
    <variation>Q</variation>
    <location>
        <position position="6462"/>
    </location>
</feature>
<feature type="sequence variant" id="VAR_048628" description="In dbSNP:rs668556." evidence="9 10">
    <original>S</original>
    <variation>T</variation>
    <location>
        <position position="6628"/>
    </location>
</feature>
<feature type="sequence variant" id="VAR_081966" description="In LIS9; uncertain significance; dbSNP:rs1488808726." evidence="17">
    <original>G</original>
    <variation>R</variation>
    <location>
        <position position="6664"/>
    </location>
</feature>
<feature type="sequence variant" id="VAR_048629" description="In dbSNP:rs2296174.">
    <original>T</original>
    <variation>I</variation>
    <location>
        <position position="6752"/>
    </location>
</feature>
<feature type="sequence variant" id="VAR_048630" description="In dbSNP:rs12068423.">
    <original>I</original>
    <variation>V</variation>
    <location>
        <position position="6855"/>
    </location>
</feature>
<feature type="sequence variant" id="VAR_065256" description="In a breast cancer sample; somatic mutation." evidence="13">
    <original>G</original>
    <variation>E</variation>
    <location>
        <position position="7093"/>
    </location>
</feature>
<feature type="sequence variant" id="VAR_081967" description="In LIS9; dbSNP:rs1557668270." evidence="17">
    <original>C</original>
    <variation>F</variation>
    <location>
        <position position="7135"/>
    </location>
</feature>
<feature type="sequence variant" id="VAR_081968" description="In LIS9; dbSNP:rs1557670503." evidence="17">
    <original>D</original>
    <variation>Y</variation>
    <location>
        <position position="7186"/>
    </location>
</feature>
<feature type="sequence variant" id="VAR_081969" description="In LIS9; dbSNP:rs1557670520." evidence="17">
    <original>C</original>
    <variation>F</variation>
    <location>
        <position position="7188"/>
    </location>
</feature>
<feature type="sequence variant" id="VAR_081970" description="In LIS9; dbSNP:rs1557670515." evidence="17">
    <original>C</original>
    <variation>G</variation>
    <location>
        <position position="7188"/>
    </location>
</feature>
<feature type="sequence conflict" description="In Ref. 4; AAL39000." evidence="24" ref="4">
    <original>TA</original>
    <variation>LP</variation>
    <location>
        <begin position="1295"/>
        <end position="1296"/>
    </location>
</feature>
<feature type="sequence conflict" description="In Ref. 1; BAA83821 and 4; AAL39000." evidence="24" ref="1 4">
    <original>T</original>
    <variation>A</variation>
    <location>
        <position position="1487"/>
    </location>
</feature>
<feature type="sequence conflict" description="In Ref. 3; AAL38997." evidence="24" ref="3">
    <original>P</original>
    <variation>S</variation>
    <location>
        <position position="3277"/>
    </location>
</feature>
<feature type="sequence conflict" description="In Ref. 1; BAA83821." evidence="24" ref="1">
    <original>V</original>
    <variation>A</variation>
    <location>
        <position position="4030"/>
    </location>
</feature>
<feature type="sequence conflict" description="In Ref. 1; BAA83821." evidence="24" ref="1">
    <original>E</original>
    <variation>D</variation>
    <location>
        <position position="4119"/>
    </location>
</feature>
<feature type="sequence conflict" description="In Ref. 2; AAF06360." evidence="24" ref="2">
    <original>E</original>
    <variation>K</variation>
    <location>
        <position position="4150"/>
    </location>
</feature>
<feature type="sequence conflict" description="In Ref. 1; BAA83821." evidence="24" ref="1">
    <original>C</original>
    <variation>Y</variation>
    <location>
        <position position="4388"/>
    </location>
</feature>
<feature type="sequence conflict" description="In Ref. 5; BAA86565." evidence="24" ref="5">
    <original>SILPSVG</original>
    <variation>EYRLFKI</variation>
    <location>
        <begin position="4411"/>
        <end position="4417"/>
    </location>
</feature>
<feature type="sequence conflict" description="In Ref. 1; BAA83821." evidence="24" ref="1">
    <original>R</original>
    <variation>Q</variation>
    <location>
        <position position="4590"/>
    </location>
</feature>
<feature type="sequence conflict" description="In Ref. 2; AAF06360." evidence="24" ref="2">
    <location>
        <position position="6791"/>
    </location>
</feature>
<feature type="helix" evidence="34">
    <location>
        <begin position="75"/>
        <end position="93"/>
    </location>
</feature>
<feature type="turn" evidence="34">
    <location>
        <begin position="94"/>
        <end position="96"/>
    </location>
</feature>
<feature type="turn" evidence="34">
    <location>
        <begin position="102"/>
        <end position="108"/>
    </location>
</feature>
<feature type="helix" evidence="34">
    <location>
        <begin position="110"/>
        <end position="120"/>
    </location>
</feature>
<feature type="helix" evidence="34">
    <location>
        <begin position="132"/>
        <end position="148"/>
    </location>
</feature>
<feature type="helix" evidence="34">
    <location>
        <begin position="158"/>
        <end position="162"/>
    </location>
</feature>
<feature type="helix" evidence="34">
    <location>
        <begin position="166"/>
        <end position="180"/>
    </location>
</feature>
<feature type="turn" evidence="34">
    <location>
        <begin position="181"/>
        <end position="183"/>
    </location>
</feature>
<feature type="helix" evidence="34">
    <location>
        <begin position="196"/>
        <end position="208"/>
    </location>
</feature>
<feature type="strand" evidence="34">
    <location>
        <begin position="211"/>
        <end position="213"/>
    </location>
</feature>
<feature type="helix" evidence="34">
    <location>
        <begin position="221"/>
        <end position="223"/>
    </location>
</feature>
<feature type="helix" evidence="34">
    <location>
        <begin position="227"/>
        <end position="236"/>
    </location>
</feature>
<feature type="helix" evidence="34">
    <location>
        <begin position="243"/>
        <end position="246"/>
    </location>
</feature>
<feature type="helix" evidence="34">
    <location>
        <begin position="251"/>
        <end position="264"/>
    </location>
</feature>
<feature type="helix" evidence="34">
    <location>
        <begin position="273"/>
        <end position="276"/>
    </location>
</feature>
<feature type="strand" evidence="34">
    <location>
        <begin position="277"/>
        <end position="280"/>
    </location>
</feature>
<feature type="helix" evidence="34">
    <location>
        <begin position="283"/>
        <end position="296"/>
    </location>
</feature>
<feature type="strand" evidence="34">
    <location>
        <begin position="302"/>
        <end position="305"/>
    </location>
</feature>
<feature type="turn" evidence="34">
    <location>
        <begin position="309"/>
        <end position="311"/>
    </location>
</feature>
<feature type="helix" evidence="34">
    <location>
        <begin position="312"/>
        <end position="332"/>
    </location>
</feature>
<feature type="helix" evidence="34">
    <location>
        <begin position="335"/>
        <end position="337"/>
    </location>
</feature>
<feature type="helix" evidence="34">
    <location>
        <begin position="358"/>
        <end position="361"/>
    </location>
</feature>
<feature type="helix" evidence="34">
    <location>
        <begin position="363"/>
        <end position="386"/>
    </location>
</feature>
<feature type="helix" evidence="34">
    <location>
        <begin position="398"/>
        <end position="418"/>
    </location>
</feature>
<feature type="strand" evidence="35">
    <location>
        <begin position="7024"/>
        <end position="7026"/>
    </location>
</feature>
<feature type="helix" evidence="35">
    <location>
        <begin position="7028"/>
        <end position="7041"/>
    </location>
</feature>
<feature type="helix" evidence="35">
    <location>
        <begin position="7046"/>
        <end position="7053"/>
    </location>
</feature>
<feature type="strand" evidence="35">
    <location>
        <begin position="7058"/>
        <end position="7062"/>
    </location>
</feature>
<feature type="helix" evidence="35">
    <location>
        <begin position="7063"/>
        <end position="7072"/>
    </location>
</feature>
<feature type="helix" evidence="35">
    <location>
        <begin position="7079"/>
        <end position="7089"/>
    </location>
</feature>
<feature type="strand" evidence="35">
    <location>
        <begin position="7094"/>
        <end position="7098"/>
    </location>
</feature>
<feature type="helix" evidence="35">
    <location>
        <begin position="7099"/>
        <end position="7106"/>
    </location>
</feature>
<feature type="helix" evidence="36">
    <location>
        <begin position="7118"/>
        <end position="7130"/>
    </location>
</feature>
<feature type="strand" evidence="36">
    <location>
        <begin position="7141"/>
        <end position="7143"/>
    </location>
</feature>
<feature type="strand" evidence="36">
    <location>
        <begin position="7148"/>
        <end position="7151"/>
    </location>
</feature>
<feature type="strand" evidence="36">
    <location>
        <begin position="7157"/>
        <end position="7163"/>
    </location>
</feature>
<feature type="strand" evidence="36">
    <location>
        <begin position="7166"/>
        <end position="7171"/>
    </location>
</feature>
<feature type="strand" evidence="36">
    <location>
        <begin position="7174"/>
        <end position="7177"/>
    </location>
</feature>
<feature type="helix" evidence="36">
    <location>
        <begin position="7178"/>
        <end position="7185"/>
    </location>
</feature>
<feature type="helix" evidence="36">
    <location>
        <begin position="7187"/>
        <end position="7192"/>
    </location>
</feature>
<organism>
    <name type="scientific">Homo sapiens</name>
    <name type="common">Human</name>
    <dbReference type="NCBI Taxonomy" id="9606"/>
    <lineage>
        <taxon>Eukaryota</taxon>
        <taxon>Metazoa</taxon>
        <taxon>Chordata</taxon>
        <taxon>Craniata</taxon>
        <taxon>Vertebrata</taxon>
        <taxon>Euteleostomi</taxon>
        <taxon>Mammalia</taxon>
        <taxon>Eutheria</taxon>
        <taxon>Euarchontoglires</taxon>
        <taxon>Primates</taxon>
        <taxon>Haplorrhini</taxon>
        <taxon>Catarrhini</taxon>
        <taxon>Hominidae</taxon>
        <taxon>Homo</taxon>
    </lineage>
</organism>
<name>MACF1_HUMAN</name>
<accession>Q9UPN3</accession>
<accession>B1ALC5</accession>
<accession>E9PJT0</accession>
<accession>O75053</accession>
<accession>Q5VW20</accession>
<accession>Q8WXY1</accession>
<accession>Q8WXY2</accession>
<accession>Q96PK2</accession>
<accession>Q9H540</accession>
<accession>Q9UKP0</accession>
<accession>Q9ULG9</accession>
<protein>
    <recommendedName>
        <fullName evidence="24">Microtubule-actin cross-linking factor 1, isoforms 1/2/3/4/5</fullName>
    </recommendedName>
    <alternativeName>
        <fullName>620 kDa actin-binding protein</fullName>
        <shortName>ABP620</shortName>
    </alternativeName>
    <alternativeName>
        <fullName evidence="22">Actin cross-linking family protein 7</fullName>
    </alternativeName>
    <alternativeName>
        <fullName evidence="18">Macrophin-1</fullName>
    </alternativeName>
    <alternativeName>
        <fullName>Trabeculin-alpha</fullName>
    </alternativeName>
</protein>
<keyword id="KW-0002">3D-structure</keyword>
<keyword id="KW-0007">Acetylation</keyword>
<keyword id="KW-0009">Actin-binding</keyword>
<keyword id="KW-0025">Alternative splicing</keyword>
<keyword id="KW-0106">Calcium</keyword>
<keyword id="KW-1003">Cell membrane</keyword>
<keyword id="KW-0966">Cell projection</keyword>
<keyword id="KW-0963">Cytoplasm</keyword>
<keyword id="KW-0206">Cytoskeleton</keyword>
<keyword id="KW-0225">Disease variant</keyword>
<keyword id="KW-0333">Golgi apparatus</keyword>
<keyword id="KW-0433">Leucine-rich repeat</keyword>
<keyword id="KW-0451">Lissencephaly</keyword>
<keyword id="KW-0472">Membrane</keyword>
<keyword id="KW-0479">Metal-binding</keyword>
<keyword id="KW-0493">Microtubule</keyword>
<keyword id="KW-0597">Phosphoprotein</keyword>
<keyword id="KW-1267">Proteomics identification</keyword>
<keyword id="KW-1185">Reference proteome</keyword>
<keyword id="KW-0677">Repeat</keyword>
<keyword id="KW-0728">SH3 domain</keyword>
<keyword id="KW-0879">Wnt signaling pathway</keyword>
<evidence type="ECO:0000250" key="1"/>
<evidence type="ECO:0000250" key="2">
    <source>
        <dbReference type="UniProtKB" id="D3ZHV2"/>
    </source>
</evidence>
<evidence type="ECO:0000250" key="3">
    <source>
        <dbReference type="UniProtKB" id="Q9QXZ0"/>
    </source>
</evidence>
<evidence type="ECO:0000255" key="4">
    <source>
        <dbReference type="PROSITE-ProRule" id="PRU00044"/>
    </source>
</evidence>
<evidence type="ECO:0000255" key="5">
    <source>
        <dbReference type="PROSITE-ProRule" id="PRU00192"/>
    </source>
</evidence>
<evidence type="ECO:0000255" key="6">
    <source>
        <dbReference type="PROSITE-ProRule" id="PRU00448"/>
    </source>
</evidence>
<evidence type="ECO:0000255" key="7">
    <source>
        <dbReference type="PROSITE-ProRule" id="PRU00792"/>
    </source>
</evidence>
<evidence type="ECO:0000256" key="8">
    <source>
        <dbReference type="SAM" id="MobiDB-lite"/>
    </source>
</evidence>
<evidence type="ECO:0000269" key="9">
    <source>
    </source>
</evidence>
<evidence type="ECO:0000269" key="10">
    <source>
    </source>
</evidence>
<evidence type="ECO:0000269" key="11">
    <source>
    </source>
</evidence>
<evidence type="ECO:0000269" key="12">
    <source>
    </source>
</evidence>
<evidence type="ECO:0000269" key="13">
    <source>
    </source>
</evidence>
<evidence type="ECO:0000269" key="14">
    <source>
    </source>
</evidence>
<evidence type="ECO:0000269" key="15">
    <source>
    </source>
</evidence>
<evidence type="ECO:0000269" key="16">
    <source>
    </source>
</evidence>
<evidence type="ECO:0000269" key="17">
    <source>
    </source>
</evidence>
<evidence type="ECO:0000303" key="18">
    <source>
    </source>
</evidence>
<evidence type="ECO:0000303" key="19">
    <source>
    </source>
</evidence>
<evidence type="ECO:0000303" key="20">
    <source>
    </source>
</evidence>
<evidence type="ECO:0000303" key="21">
    <source>
    </source>
</evidence>
<evidence type="ECO:0000303" key="22">
    <source>
    </source>
</evidence>
<evidence type="ECO:0000303" key="23">
    <source>
    </source>
</evidence>
<evidence type="ECO:0000305" key="24"/>
<evidence type="ECO:0000312" key="25">
    <source>
        <dbReference type="HGNC" id="HGNC:13664"/>
    </source>
</evidence>
<evidence type="ECO:0007744" key="26">
    <source>
    </source>
</evidence>
<evidence type="ECO:0007744" key="27">
    <source>
    </source>
</evidence>
<evidence type="ECO:0007744" key="28">
    <source>
    </source>
</evidence>
<evidence type="ECO:0007744" key="29">
    <source>
    </source>
</evidence>
<evidence type="ECO:0007744" key="30">
    <source>
    </source>
</evidence>
<evidence type="ECO:0007744" key="31">
    <source>
    </source>
</evidence>
<evidence type="ECO:0007744" key="32">
    <source>
    </source>
</evidence>
<evidence type="ECO:0007744" key="33">
    <source>
    </source>
</evidence>
<evidence type="ECO:0007829" key="34">
    <source>
        <dbReference type="PDB" id="4Z6G"/>
    </source>
</evidence>
<evidence type="ECO:0007829" key="35">
    <source>
        <dbReference type="PDB" id="5VE9"/>
    </source>
</evidence>
<evidence type="ECO:0007829" key="36">
    <source>
        <dbReference type="PDB" id="5X57"/>
    </source>
</evidence>
<reference key="1">
    <citation type="journal article" date="1999" name="Biochem. Biophys. Res. Commun.">
        <title>Molecular cloning of macrophin, a human homologue of Drosophila kakapo with a close structural similarity to plectin and dystrophin.</title>
        <authorList>
            <person name="Okuda T."/>
            <person name="Matsuda S."/>
            <person name="Nakatsugawa S."/>
            <person name="Ichigotani Y."/>
            <person name="Iwahashi N."/>
            <person name="Takahashi M."/>
            <person name="Ishigaki T."/>
            <person name="Hamaguchi M."/>
        </authorList>
    </citation>
    <scope>NUCLEOTIDE SEQUENCE [MRNA] (ISOFORM 2)</scope>
</reference>
<reference key="2">
    <citation type="journal article" date="1999" name="J. Biol. Chem.">
        <title>Molecular cloning and characterization of human trabeculin-alpha, a giant protein defining a new family of actin-binding proteins.</title>
        <authorList>
            <person name="Sun Y."/>
            <person name="Zhang J."/>
            <person name="Kraeft S.-K."/>
            <person name="Auclair D."/>
            <person name="Chang M.-S."/>
            <person name="Liu Y."/>
            <person name="Sutherland R."/>
            <person name="Salgia R."/>
            <person name="Griffin J.D."/>
            <person name="Ferland L.H."/>
            <person name="Chen L.B."/>
        </authorList>
    </citation>
    <scope>NUCLEOTIDE SEQUENCE [MRNA] (ISOFORM 3)</scope>
    <scope>VARIANTS VAL-4357 AND THR-6628</scope>
</reference>
<reference key="3">
    <citation type="journal article" date="2001" name="Mamm. Genome">
        <title>MACF1 gene structure: a hybrid of plectin and dystrophin.</title>
        <authorList>
            <person name="Gong T.-W.L."/>
            <person name="Besirli C.G."/>
            <person name="Lomax M.I."/>
        </authorList>
    </citation>
    <scope>NUCLEOTIDE SEQUENCE [GENOMIC DNA / MRNA] (ISOFORM 4)</scope>
    <scope>NUCLEOTIDE SEQUENCE [GENOMIC DNA] OF 182-6770 (ISOFORM 1)</scope>
    <scope>ALTERNATIVE SPLICING</scope>
    <scope>TISSUE SPECIFICITY</scope>
    <scope>VARIANT THR-6628</scope>
</reference>
<reference key="4">
    <citation type="journal article" date="2006" name="Nature">
        <title>The DNA sequence and biological annotation of human chromosome 1.</title>
        <authorList>
            <person name="Gregory S.G."/>
            <person name="Barlow K.F."/>
            <person name="McLay K.E."/>
            <person name="Kaul R."/>
            <person name="Swarbreck D."/>
            <person name="Dunham A."/>
            <person name="Scott C.E."/>
            <person name="Howe K.L."/>
            <person name="Woodfine K."/>
            <person name="Spencer C.C.A."/>
            <person name="Jones M.C."/>
            <person name="Gillson C."/>
            <person name="Searle S."/>
            <person name="Zhou Y."/>
            <person name="Kokocinski F."/>
            <person name="McDonald L."/>
            <person name="Evans R."/>
            <person name="Phillips K."/>
            <person name="Atkinson A."/>
            <person name="Cooper R."/>
            <person name="Jones C."/>
            <person name="Hall R.E."/>
            <person name="Andrews T.D."/>
            <person name="Lloyd C."/>
            <person name="Ainscough R."/>
            <person name="Almeida J.P."/>
            <person name="Ambrose K.D."/>
            <person name="Anderson F."/>
            <person name="Andrew R.W."/>
            <person name="Ashwell R.I.S."/>
            <person name="Aubin K."/>
            <person name="Babbage A.K."/>
            <person name="Bagguley C.L."/>
            <person name="Bailey J."/>
            <person name="Beasley H."/>
            <person name="Bethel G."/>
            <person name="Bird C.P."/>
            <person name="Bray-Allen S."/>
            <person name="Brown J.Y."/>
            <person name="Brown A.J."/>
            <person name="Buckley D."/>
            <person name="Burton J."/>
            <person name="Bye J."/>
            <person name="Carder C."/>
            <person name="Chapman J.C."/>
            <person name="Clark S.Y."/>
            <person name="Clarke G."/>
            <person name="Clee C."/>
            <person name="Cobley V."/>
            <person name="Collier R.E."/>
            <person name="Corby N."/>
            <person name="Coville G.J."/>
            <person name="Davies J."/>
            <person name="Deadman R."/>
            <person name="Dunn M."/>
            <person name="Earthrowl M."/>
            <person name="Ellington A.G."/>
            <person name="Errington H."/>
            <person name="Frankish A."/>
            <person name="Frankland J."/>
            <person name="French L."/>
            <person name="Garner P."/>
            <person name="Garnett J."/>
            <person name="Gay L."/>
            <person name="Ghori M.R.J."/>
            <person name="Gibson R."/>
            <person name="Gilby L.M."/>
            <person name="Gillett W."/>
            <person name="Glithero R.J."/>
            <person name="Grafham D.V."/>
            <person name="Griffiths C."/>
            <person name="Griffiths-Jones S."/>
            <person name="Grocock R."/>
            <person name="Hammond S."/>
            <person name="Harrison E.S.I."/>
            <person name="Hart E."/>
            <person name="Haugen E."/>
            <person name="Heath P.D."/>
            <person name="Holmes S."/>
            <person name="Holt K."/>
            <person name="Howden P.J."/>
            <person name="Hunt A.R."/>
            <person name="Hunt S.E."/>
            <person name="Hunter G."/>
            <person name="Isherwood J."/>
            <person name="James R."/>
            <person name="Johnson C."/>
            <person name="Johnson D."/>
            <person name="Joy A."/>
            <person name="Kay M."/>
            <person name="Kershaw J.K."/>
            <person name="Kibukawa M."/>
            <person name="Kimberley A.M."/>
            <person name="King A."/>
            <person name="Knights A.J."/>
            <person name="Lad H."/>
            <person name="Laird G."/>
            <person name="Lawlor S."/>
            <person name="Leongamornlert D.A."/>
            <person name="Lloyd D.M."/>
            <person name="Loveland J."/>
            <person name="Lovell J."/>
            <person name="Lush M.J."/>
            <person name="Lyne R."/>
            <person name="Martin S."/>
            <person name="Mashreghi-Mohammadi M."/>
            <person name="Matthews L."/>
            <person name="Matthews N.S.W."/>
            <person name="McLaren S."/>
            <person name="Milne S."/>
            <person name="Mistry S."/>
            <person name="Moore M.J.F."/>
            <person name="Nickerson T."/>
            <person name="O'Dell C.N."/>
            <person name="Oliver K."/>
            <person name="Palmeiri A."/>
            <person name="Palmer S.A."/>
            <person name="Parker A."/>
            <person name="Patel D."/>
            <person name="Pearce A.V."/>
            <person name="Peck A.I."/>
            <person name="Pelan S."/>
            <person name="Phelps K."/>
            <person name="Phillimore B.J."/>
            <person name="Plumb R."/>
            <person name="Rajan J."/>
            <person name="Raymond C."/>
            <person name="Rouse G."/>
            <person name="Saenphimmachak C."/>
            <person name="Sehra H.K."/>
            <person name="Sheridan E."/>
            <person name="Shownkeen R."/>
            <person name="Sims S."/>
            <person name="Skuce C.D."/>
            <person name="Smith M."/>
            <person name="Steward C."/>
            <person name="Subramanian S."/>
            <person name="Sycamore N."/>
            <person name="Tracey A."/>
            <person name="Tromans A."/>
            <person name="Van Helmond Z."/>
            <person name="Wall M."/>
            <person name="Wallis J.M."/>
            <person name="White S."/>
            <person name="Whitehead S.L."/>
            <person name="Wilkinson J.E."/>
            <person name="Willey D.L."/>
            <person name="Williams H."/>
            <person name="Wilming L."/>
            <person name="Wray P.W."/>
            <person name="Wu Z."/>
            <person name="Coulson A."/>
            <person name="Vaudin M."/>
            <person name="Sulston J.E."/>
            <person name="Durbin R.M."/>
            <person name="Hubbard T."/>
            <person name="Wooster R."/>
            <person name="Dunham I."/>
            <person name="Carter N.P."/>
            <person name="McVean G."/>
            <person name="Ross M.T."/>
            <person name="Harrow J."/>
            <person name="Olson M.V."/>
            <person name="Beck S."/>
            <person name="Rogers J."/>
            <person name="Bentley D.R."/>
        </authorList>
    </citation>
    <scope>NUCLEOTIDE SEQUENCE [LARGE SCALE GENOMIC DNA]</scope>
</reference>
<reference key="5">
    <citation type="journal article" date="1999" name="DNA Res.">
        <title>Prediction of the coding sequences of unidentified human genes. XV. The complete sequences of 100 new cDNA clones from brain which code for large proteins in vitro.</title>
        <authorList>
            <person name="Nagase T."/>
            <person name="Ishikawa K."/>
            <person name="Kikuno R."/>
            <person name="Hirosawa M."/>
            <person name="Nomura N."/>
            <person name="Ohara O."/>
        </authorList>
    </citation>
    <scope>NUCLEOTIDE SEQUENCE [LARGE SCALE MRNA] OF 868-4417 (ISOFORM 2)</scope>
    <source>
        <tissue>Brain</tissue>
    </source>
</reference>
<reference key="6">
    <citation type="journal article" date="1997" name="DNA Res.">
        <title>Characterization of cDNA clones in size-fractionated cDNA libraries from human brain.</title>
        <authorList>
            <person name="Seki N."/>
            <person name="Ohira M."/>
            <person name="Nagase T."/>
            <person name="Ishikawa K."/>
            <person name="Miyajima N."/>
            <person name="Nakajima D."/>
            <person name="Nomura N."/>
            <person name="Ohara O."/>
        </authorList>
    </citation>
    <scope>NUCLEOTIDE SEQUENCE [LARGE SCALE MRNA] OF 868-7388 (ISOFORM 5)</scope>
    <source>
        <tissue>Brain</tissue>
    </source>
</reference>
<reference key="7">
    <citation type="journal article" date="2002" name="DNA Res.">
        <title>Construction of expression-ready cDNA clones for KIAA genes: manual curation of 330 KIAA cDNA clones.</title>
        <authorList>
            <person name="Nakajima D."/>
            <person name="Okazaki N."/>
            <person name="Yamakawa H."/>
            <person name="Kikuno R."/>
            <person name="Ohara O."/>
            <person name="Nagase T."/>
        </authorList>
    </citation>
    <scope>SEQUENCE REVISION</scope>
</reference>
<reference key="8">
    <citation type="submission" date="2003-08" db="EMBL/GenBank/DDBJ databases">
        <authorList>
            <person name="Ohara O."/>
        </authorList>
    </citation>
    <scope>SEQUENCE REVISION</scope>
</reference>
<reference key="9">
    <citation type="journal article" date="2004" name="Exp. Cell Res.">
        <title>Interaction between p230 and MACF1 is associated with transport of a glycosyl phosphatidyl inositol-anchored protein from the Golgi to the cell periphery.</title>
        <authorList>
            <person name="Kakinuma T."/>
            <person name="Ichikawa H."/>
            <person name="Tsukada Y."/>
            <person name="Nakamura T."/>
            <person name="Toh B.H."/>
        </authorList>
    </citation>
    <scope>FUNCTION</scope>
    <scope>SUBCELLULAR LOCATION</scope>
    <scope>INTERACTION WITH GOLGA4</scope>
</reference>
<reference key="10">
    <citation type="journal article" date="2005" name="J. Cell Sci.">
        <title>Microtubule actin crosslinking factor 1b: a novel plakin that localizes to the Golgi complex.</title>
        <authorList>
            <person name="Lin C.-M."/>
            <person name="Chen H.-J."/>
            <person name="Leung C.L."/>
            <person name="Parry D.A.D."/>
            <person name="Liem R.K.H."/>
        </authorList>
    </citation>
    <scope>IDENTIFICATION OF ISOFORM 1</scope>
    <scope>SUBCELLULAR LOCATION</scope>
    <scope>TISSUE SPECIFICITY</scope>
</reference>
<reference key="11">
    <citation type="journal article" date="2006" name="Cell">
        <title>Global, in vivo, and site-specific phosphorylation dynamics in signaling networks.</title>
        <authorList>
            <person name="Olsen J.V."/>
            <person name="Blagoev B."/>
            <person name="Gnad F."/>
            <person name="Macek B."/>
            <person name="Kumar C."/>
            <person name="Mortensen P."/>
            <person name="Mann M."/>
        </authorList>
    </citation>
    <scope>PHOSPHORYLATION [LARGE SCALE ANALYSIS] AT SER-4521</scope>
    <scope>IDENTIFICATION BY MASS SPECTROMETRY [LARGE SCALE ANALYSIS]</scope>
    <source>
        <tissue>Cervix carcinoma</tissue>
    </source>
</reference>
<reference key="12">
    <citation type="journal article" date="2008" name="Proc. Natl. Acad. Sci. U.S.A.">
        <title>A quantitative atlas of mitotic phosphorylation.</title>
        <authorList>
            <person name="Dephoure N."/>
            <person name="Zhou C."/>
            <person name="Villen J."/>
            <person name="Beausoleil S.A."/>
            <person name="Bakalarski C.E."/>
            <person name="Elledge S.J."/>
            <person name="Gygi S.P."/>
        </authorList>
    </citation>
    <scope>PHOSPHORYLATION [LARGE SCALE ANALYSIS] AT SER-1376; SER-3927; SER-4495; SER-4496; SER-6967; THR-7254; SER-7292 AND SER-7330</scope>
    <scope>IDENTIFICATION BY MASS SPECTROMETRY [LARGE SCALE ANALYSIS]</scope>
    <source>
        <tissue>Cervix carcinoma</tissue>
    </source>
</reference>
<reference key="13">
    <citation type="journal article" date="2009" name="Anal. Chem.">
        <title>Lys-N and trypsin cover complementary parts of the phosphoproteome in a refined SCX-based approach.</title>
        <authorList>
            <person name="Gauci S."/>
            <person name="Helbig A.O."/>
            <person name="Slijper M."/>
            <person name="Krijgsveld J."/>
            <person name="Heck A.J."/>
            <person name="Mohammed S."/>
        </authorList>
    </citation>
    <scope>IDENTIFICATION BY MASS SPECTROMETRY [LARGE SCALE ANALYSIS]</scope>
</reference>
<reference key="14">
    <citation type="journal article" date="2009" name="Sci. Signal.">
        <title>Quantitative phosphoproteomic analysis of T cell receptor signaling reveals system-wide modulation of protein-protein interactions.</title>
        <authorList>
            <person name="Mayya V."/>
            <person name="Lundgren D.H."/>
            <person name="Hwang S.-I."/>
            <person name="Rezaul K."/>
            <person name="Wu L."/>
            <person name="Eng J.K."/>
            <person name="Rodionov V."/>
            <person name="Han D.K."/>
        </authorList>
    </citation>
    <scope>PHOSPHORYLATION [LARGE SCALE ANALYSIS] AT SER-1376; SER-4521 AND SER-7330</scope>
    <scope>IDENTIFICATION BY MASS SPECTROMETRY [LARGE SCALE ANALYSIS]</scope>
    <source>
        <tissue>Leukemic T-cell</tissue>
    </source>
</reference>
<reference key="15">
    <citation type="journal article" date="2009" name="Science">
        <title>Lysine acetylation targets protein complexes and co-regulates major cellular functions.</title>
        <authorList>
            <person name="Choudhary C."/>
            <person name="Kumar C."/>
            <person name="Gnad F."/>
            <person name="Nielsen M.L."/>
            <person name="Rehman M."/>
            <person name="Walther T.C."/>
            <person name="Olsen J.V."/>
            <person name="Mann M."/>
        </authorList>
    </citation>
    <scope>ACETYLATION [LARGE SCALE ANALYSIS] AT LYS-6210</scope>
    <scope>IDENTIFICATION BY MASS SPECTROMETRY [LARGE SCALE ANALYSIS]</scope>
</reference>
<reference key="16">
    <citation type="journal article" date="2010" name="Proc. Natl. Acad. Sci. U.S.A.">
        <title>ErbB2 receptor controls microtubule capture by recruiting ACF7 to the plasma membrane of migrating cells.</title>
        <authorList>
            <person name="Zaoui K."/>
            <person name="Benseddik K."/>
            <person name="Daou P."/>
            <person name="Salaun D."/>
            <person name="Badache A."/>
        </authorList>
    </citation>
    <scope>FUNCTION</scope>
    <scope>SUBCELLULAR LOCATION</scope>
</reference>
<reference key="17">
    <citation type="journal article" date="2010" name="Sci. Signal.">
        <title>Quantitative phosphoproteomics reveals widespread full phosphorylation site occupancy during mitosis.</title>
        <authorList>
            <person name="Olsen J.V."/>
            <person name="Vermeulen M."/>
            <person name="Santamaria A."/>
            <person name="Kumar C."/>
            <person name="Miller M.L."/>
            <person name="Jensen L.J."/>
            <person name="Gnad F."/>
            <person name="Cox J."/>
            <person name="Jensen T.S."/>
            <person name="Nigg E.A."/>
            <person name="Brunak S."/>
            <person name="Mann M."/>
        </authorList>
    </citation>
    <scope>PHOSPHORYLATION [LARGE SCALE ANALYSIS] AT SER-280; SER-1376; SER-3927 AND SER-4521</scope>
    <scope>IDENTIFICATION BY MASS SPECTROMETRY [LARGE SCALE ANALYSIS]</scope>
    <source>
        <tissue>Cervix carcinoma</tissue>
    </source>
</reference>
<reference key="18">
    <citation type="journal article" date="2011" name="BMC Syst. Biol.">
        <title>Initial characterization of the human central proteome.</title>
        <authorList>
            <person name="Burkard T.R."/>
            <person name="Planyavsky M."/>
            <person name="Kaupe I."/>
            <person name="Breitwieser F.P."/>
            <person name="Buerckstuemmer T."/>
            <person name="Bennett K.L."/>
            <person name="Superti-Furga G."/>
            <person name="Colinge J."/>
        </authorList>
    </citation>
    <scope>IDENTIFICATION BY MASS SPECTROMETRY [LARGE SCALE ANALYSIS]</scope>
</reference>
<reference key="19">
    <citation type="journal article" date="2011" name="Sci. Signal.">
        <title>System-wide temporal characterization of the proteome and phosphoproteome of human embryonic stem cell differentiation.</title>
        <authorList>
            <person name="Rigbolt K.T."/>
            <person name="Prokhorova T.A."/>
            <person name="Akimov V."/>
            <person name="Henningsen J."/>
            <person name="Johansen P.T."/>
            <person name="Kratchmarova I."/>
            <person name="Kassem M."/>
            <person name="Mann M."/>
            <person name="Olsen J.V."/>
            <person name="Blagoev B."/>
        </authorList>
    </citation>
    <scope>PHOSPHORYLATION [LARGE SCALE ANALYSIS] AT SER-280; SER-1376; SER-4496; SER-4521 AND SER-4962</scope>
    <scope>IDENTIFICATION BY MASS SPECTROMETRY [LARGE SCALE ANALYSIS]</scope>
</reference>
<reference key="20">
    <citation type="journal article" date="2013" name="J. Proteome Res.">
        <title>Toward a comprehensive characterization of a human cancer cell phosphoproteome.</title>
        <authorList>
            <person name="Zhou H."/>
            <person name="Di Palma S."/>
            <person name="Preisinger C."/>
            <person name="Peng M."/>
            <person name="Polat A.N."/>
            <person name="Heck A.J."/>
            <person name="Mohammed S."/>
        </authorList>
    </citation>
    <scope>PHOSPHORYLATION [LARGE SCALE ANALYSIS] AT SER-1122; SER-1367; SER-1376; SER-2006; SER-2051; SER-3331; SER-3927; SER-4496; SER-4521; SER-4836; SER-5808; SER-6967; SER-7279 AND SER-7330</scope>
    <scope>IDENTIFICATION BY MASS SPECTROMETRY [LARGE SCALE ANALYSIS]</scope>
    <source>
        <tissue>Cervix carcinoma</tissue>
        <tissue>Erythroleukemia</tissue>
    </source>
</reference>
<reference key="21">
    <citation type="journal article" date="2014" name="J. Proteomics">
        <title>An enzyme assisted RP-RPLC approach for in-depth analysis of human liver phosphoproteome.</title>
        <authorList>
            <person name="Bian Y."/>
            <person name="Song C."/>
            <person name="Cheng K."/>
            <person name="Dong M."/>
            <person name="Wang F."/>
            <person name="Huang J."/>
            <person name="Sun D."/>
            <person name="Wang L."/>
            <person name="Ye M."/>
            <person name="Zou H."/>
        </authorList>
    </citation>
    <scope>PHOSPHORYLATION [LARGE SCALE ANALYSIS] AT SER-280; SER-814; SER-1376; SER-3927; SER-5808; SER-6032 AND SER-7330</scope>
    <scope>IDENTIFICATION BY MASS SPECTROMETRY [LARGE SCALE ANALYSIS]</scope>
    <source>
        <tissue>Liver</tissue>
    </source>
</reference>
<reference key="22">
    <citation type="journal article" date="2015" name="Proteomics">
        <title>N-terminome analysis of the human mitochondrial proteome.</title>
        <authorList>
            <person name="Vaca Jacome A.S."/>
            <person name="Rabilloud T."/>
            <person name="Schaeffer-Reiss C."/>
            <person name="Rompais M."/>
            <person name="Ayoub D."/>
            <person name="Lane L."/>
            <person name="Bairoch A."/>
            <person name="Van Dorsselaer A."/>
            <person name="Carapito C."/>
        </authorList>
    </citation>
    <scope>IDENTIFICATION BY MASS SPECTROMETRY [LARGE SCALE ANALYSIS]</scope>
</reference>
<reference key="23">
    <citation type="journal article" date="2016" name="Dev. Cell">
        <title>The CAMSAP3-ACF7 complex couples noncentrosomal microtubules with actin filaments to coordinate their dynamics.</title>
        <authorList>
            <person name="Ning W."/>
            <person name="Yu Y."/>
            <person name="Xu H."/>
            <person name="Liu X."/>
            <person name="Wang D."/>
            <person name="Wang J."/>
            <person name="Wang Y."/>
            <person name="Meng W."/>
        </authorList>
    </citation>
    <scope>FUNCTION</scope>
    <scope>SUBCELLULAR LOCATION</scope>
    <scope>INTERACTION WITH CAMSAP3</scope>
</reference>
<reference key="24">
    <citation type="journal article" date="2016" name="J. Cell Sci.">
        <title>Control of apico-basal epithelial polarity by the microtubule minus-end-binding protein CAMSAP3 and spectraplakin ACF7.</title>
        <authorList>
            <person name="Noordstra I."/>
            <person name="Liu Q."/>
            <person name="Nijenhuis W."/>
            <person name="Hua S."/>
            <person name="Jiang K."/>
            <person name="Baars M."/>
            <person name="Remmelzwaal S."/>
            <person name="Martin M."/>
            <person name="Kapitein L.C."/>
            <person name="Akhmanova A."/>
        </authorList>
    </citation>
    <scope>INTERACTION WITH CAMSAP3</scope>
</reference>
<reference key="25">
    <citation type="journal article" date="2018" name="Am. J. Hum. Genet.">
        <title>MACF1 mutations encoding highly conserved zinc-binding residues of the GAR domain cause defects in neuronal migration and axon guidance.</title>
        <authorList>
            <consortium name="University of Washington Center for Mendelian Genomics"/>
            <consortium name="Center for Mendelian Genomics at the Broad Institute of MIT and Harvard"/>
            <person name="Dobyns W.B."/>
            <person name="Aldinger K.A."/>
            <person name="Ishak G.E."/>
            <person name="Mirzaa G.M."/>
            <person name="Timms A.E."/>
            <person name="Grout M.E."/>
            <person name="Dremmen M.H.G."/>
            <person name="Schot R."/>
            <person name="Vandervore L."/>
            <person name="van Slegtenhorst M.A."/>
            <person name="Wilke M."/>
            <person name="Kasteleijn E."/>
            <person name="Lee A.S."/>
            <person name="Barry B.J."/>
            <person name="Chao K.R."/>
            <person name="Szczaluba K."/>
            <person name="Kobori J."/>
            <person name="Hanson-Kahn A."/>
            <person name="Bernstein J.A."/>
            <person name="Carr L."/>
            <person name="D'Arco F."/>
            <person name="Miyana K."/>
            <person name="Okazaki T."/>
            <person name="Saito Y."/>
            <person name="Sasaki M."/>
            <person name="Das S."/>
            <person name="Wheeler M.M."/>
            <person name="Bamshad M.J."/>
            <person name="Nickerson D.A."/>
            <person name="Engle E.C."/>
            <person name="Verheijen F.W."/>
            <person name="Doherty D."/>
            <person name="Mancini G.M.S."/>
        </authorList>
    </citation>
    <scope>INVOLVEMENT IN LIS9</scope>
    <scope>VARIANTS LIS9 ARG-6664; PHE-7135; TYR-7186; GLY-7188 AND PHE-7188</scope>
</reference>
<reference key="26">
    <citation type="journal article" date="2006" name="Science">
        <title>The consensus coding sequences of human breast and colorectal cancers.</title>
        <authorList>
            <person name="Sjoeblom T."/>
            <person name="Jones S."/>
            <person name="Wood L.D."/>
            <person name="Parsons D.W."/>
            <person name="Lin J."/>
            <person name="Barber T.D."/>
            <person name="Mandelker D."/>
            <person name="Leary R.J."/>
            <person name="Ptak J."/>
            <person name="Silliman N."/>
            <person name="Szabo S."/>
            <person name="Buckhaults P."/>
            <person name="Farrell C."/>
            <person name="Meeh P."/>
            <person name="Markowitz S.D."/>
            <person name="Willis J."/>
            <person name="Dawson D."/>
            <person name="Willson J.K.V."/>
            <person name="Gazdar A.F."/>
            <person name="Hartigan J."/>
            <person name="Wu L."/>
            <person name="Liu C."/>
            <person name="Parmigiani G."/>
            <person name="Park B.H."/>
            <person name="Bachman K.E."/>
            <person name="Papadopoulos N."/>
            <person name="Vogelstein B."/>
            <person name="Kinzler K.W."/>
            <person name="Velculescu V.E."/>
        </authorList>
    </citation>
    <scope>VARIANTS [LARGE SCALE ANALYSIS] VAL-302; GLN-6462 AND GLU-7093</scope>
</reference>
<dbReference type="EMBL" id="AB029290">
    <property type="protein sequence ID" value="BAA83821.1"/>
    <property type="status" value="ALT_FRAME"/>
    <property type="molecule type" value="mRNA"/>
</dbReference>
<dbReference type="EMBL" id="AF141968">
    <property type="protein sequence ID" value="AAF06360.1"/>
    <property type="molecule type" value="mRNA"/>
</dbReference>
<dbReference type="EMBL" id="AF317696">
    <property type="protein sequence ID" value="AAL09459.1"/>
    <property type="molecule type" value="mRNA"/>
</dbReference>
<dbReference type="EMBL" id="AF325341">
    <property type="protein sequence ID" value="AAL38997.1"/>
    <property type="molecule type" value="Genomic_DNA"/>
</dbReference>
<dbReference type="EMBL" id="AF325333">
    <property type="protein sequence ID" value="AAL38997.1"/>
    <property type="status" value="JOINED"/>
    <property type="molecule type" value="Genomic_DNA"/>
</dbReference>
<dbReference type="EMBL" id="AF325334">
    <property type="protein sequence ID" value="AAL38997.1"/>
    <property type="status" value="JOINED"/>
    <property type="molecule type" value="Genomic_DNA"/>
</dbReference>
<dbReference type="EMBL" id="AF325335">
    <property type="protein sequence ID" value="AAL38997.1"/>
    <property type="status" value="JOINED"/>
    <property type="molecule type" value="Genomic_DNA"/>
</dbReference>
<dbReference type="EMBL" id="AF325336">
    <property type="protein sequence ID" value="AAL38997.1"/>
    <property type="status" value="JOINED"/>
    <property type="molecule type" value="Genomic_DNA"/>
</dbReference>
<dbReference type="EMBL" id="AF325339">
    <property type="protein sequence ID" value="AAL38997.1"/>
    <property type="status" value="JOINED"/>
    <property type="molecule type" value="Genomic_DNA"/>
</dbReference>
<dbReference type="EMBL" id="AF325340">
    <property type="protein sequence ID" value="AAL38997.1"/>
    <property type="status" value="JOINED"/>
    <property type="molecule type" value="Genomic_DNA"/>
</dbReference>
<dbReference type="EMBL" id="AF325341">
    <property type="protein sequence ID" value="AAL39000.1"/>
    <property type="molecule type" value="Genomic_DNA"/>
</dbReference>
<dbReference type="EMBL" id="AF325330">
    <property type="protein sequence ID" value="AAL39000.1"/>
    <property type="status" value="JOINED"/>
    <property type="molecule type" value="Genomic_DNA"/>
</dbReference>
<dbReference type="EMBL" id="AF325331">
    <property type="protein sequence ID" value="AAL39000.1"/>
    <property type="status" value="JOINED"/>
    <property type="molecule type" value="Genomic_DNA"/>
</dbReference>
<dbReference type="EMBL" id="AF325332">
    <property type="protein sequence ID" value="AAL39000.1"/>
    <property type="status" value="JOINED"/>
    <property type="molecule type" value="Genomic_DNA"/>
</dbReference>
<dbReference type="EMBL" id="AF325333">
    <property type="protein sequence ID" value="AAL39000.1"/>
    <property type="status" value="JOINED"/>
    <property type="molecule type" value="Genomic_DNA"/>
</dbReference>
<dbReference type="EMBL" id="AF325334">
    <property type="protein sequence ID" value="AAL39000.1"/>
    <property type="status" value="JOINED"/>
    <property type="molecule type" value="Genomic_DNA"/>
</dbReference>
<dbReference type="EMBL" id="AF325335">
    <property type="protein sequence ID" value="AAL39000.1"/>
    <property type="status" value="JOINED"/>
    <property type="molecule type" value="Genomic_DNA"/>
</dbReference>
<dbReference type="EMBL" id="AF325336">
    <property type="protein sequence ID" value="AAL39000.1"/>
    <property type="status" value="JOINED"/>
    <property type="molecule type" value="Genomic_DNA"/>
</dbReference>
<dbReference type="EMBL" id="AF325339">
    <property type="protein sequence ID" value="AAL39000.1"/>
    <property type="status" value="JOINED"/>
    <property type="molecule type" value="Genomic_DNA"/>
</dbReference>
<dbReference type="EMBL" id="AF325340">
    <property type="protein sequence ID" value="AAL39000.1"/>
    <property type="status" value="JOINED"/>
    <property type="molecule type" value="Genomic_DNA"/>
</dbReference>
<dbReference type="EMBL" id="AL137853">
    <property type="status" value="NOT_ANNOTATED_CDS"/>
    <property type="molecule type" value="Genomic_DNA"/>
</dbReference>
<dbReference type="EMBL" id="AL355477">
    <property type="status" value="NOT_ANNOTATED_CDS"/>
    <property type="molecule type" value="Genomic_DNA"/>
</dbReference>
<dbReference type="EMBL" id="AL365277">
    <property type="status" value="NOT_ANNOTATED_CDS"/>
    <property type="molecule type" value="Genomic_DNA"/>
</dbReference>
<dbReference type="EMBL" id="AL442071">
    <property type="status" value="NOT_ANNOTATED_CDS"/>
    <property type="molecule type" value="Genomic_DNA"/>
</dbReference>
<dbReference type="EMBL" id="AL356055">
    <property type="status" value="NOT_ANNOTATED_CDS"/>
    <property type="molecule type" value="Genomic_DNA"/>
</dbReference>
<dbReference type="EMBL" id="AB033077">
    <property type="protein sequence ID" value="BAA86565.1"/>
    <property type="molecule type" value="mRNA"/>
</dbReference>
<dbReference type="EMBL" id="AB007934">
    <property type="protein sequence ID" value="BAA32310.3"/>
    <property type="molecule type" value="mRNA"/>
</dbReference>
<dbReference type="CCDS" id="CCDS435.1">
    <molecule id="Q9UPN3-2"/>
</dbReference>
<dbReference type="PIR" id="T00079">
    <property type="entry name" value="T00079"/>
</dbReference>
<dbReference type="RefSeq" id="NP_036222.3">
    <molecule id="Q9UPN3-2"/>
    <property type="nucleotide sequence ID" value="NM_012090.5"/>
</dbReference>
<dbReference type="PDB" id="4Z6G">
    <property type="method" value="X-ray"/>
    <property type="resolution" value="2.65 A"/>
    <property type="chains" value="A=74-421"/>
</dbReference>
<dbReference type="PDB" id="5VE9">
    <property type="method" value="X-ray"/>
    <property type="resolution" value="2.79 A"/>
    <property type="chains" value="A/B=7024-7108, C=7118-7191"/>
</dbReference>
<dbReference type="PDB" id="5X57">
    <property type="method" value="X-ray"/>
    <property type="resolution" value="1.45 A"/>
    <property type="chains" value="A=7113-7193"/>
</dbReference>
<dbReference type="PDBsum" id="4Z6G"/>
<dbReference type="PDBsum" id="5VE9"/>
<dbReference type="PDBsum" id="5X57"/>
<dbReference type="SMR" id="Q9UPN3"/>
<dbReference type="BioGRID" id="117048">
    <property type="interactions" value="213"/>
</dbReference>
<dbReference type="CORUM" id="Q9UPN3"/>
<dbReference type="DIP" id="DIP-50616N"/>
<dbReference type="FunCoup" id="Q9UPN3">
    <property type="interactions" value="1350"/>
</dbReference>
<dbReference type="IntAct" id="Q9UPN3">
    <property type="interactions" value="82"/>
</dbReference>
<dbReference type="MINT" id="Q9UPN3"/>
<dbReference type="STRING" id="9606.ENSP00000354573"/>
<dbReference type="TCDB" id="8.A.66.1.8">
    <property type="family name" value="the dystrophin (dystrophin) family"/>
</dbReference>
<dbReference type="GlyCosmos" id="Q9UPN3">
    <property type="glycosylation" value="7 sites, 1 glycan"/>
</dbReference>
<dbReference type="GlyGen" id="Q9UPN3">
    <property type="glycosylation" value="21 sites, 2 N-linked glycans (2 sites), 1 O-linked glycan (17 sites)"/>
</dbReference>
<dbReference type="iPTMnet" id="Q9UPN3"/>
<dbReference type="PhosphoSitePlus" id="Q9UPN3"/>
<dbReference type="SwissPalm" id="Q9UPN3"/>
<dbReference type="BioMuta" id="MACF1"/>
<dbReference type="DMDM" id="338817989"/>
<dbReference type="jPOST" id="Q9UPN3"/>
<dbReference type="MassIVE" id="Q9UPN3"/>
<dbReference type="PaxDb" id="9606-ENSP00000354573"/>
<dbReference type="PeptideAtlas" id="Q9UPN3"/>
<dbReference type="ProteomicsDB" id="85382">
    <molecule id="Q9UPN3-1"/>
</dbReference>
<dbReference type="ProteomicsDB" id="85383">
    <molecule id="Q9UPN3-2"/>
</dbReference>
<dbReference type="ProteomicsDB" id="85384">
    <molecule id="Q9UPN3-3"/>
</dbReference>
<dbReference type="ProteomicsDB" id="85385">
    <molecule id="Q9UPN3-4"/>
</dbReference>
<dbReference type="ProteomicsDB" id="85386">
    <molecule id="Q9UPN3-5"/>
</dbReference>
<dbReference type="Pumba" id="Q9UPN3"/>
<dbReference type="Antibodypedia" id="31853">
    <property type="antibodies" value="74 antibodies from 18 providers"/>
</dbReference>
<dbReference type="DNASU" id="23499"/>
<dbReference type="Ensembl" id="ENST00000361689.7">
    <molecule id="Q9UPN3-2"/>
    <property type="protein sequence ID" value="ENSP00000354573.2"/>
    <property type="gene ID" value="ENSG00000127603.32"/>
</dbReference>
<dbReference type="GeneID" id="23499"/>
<dbReference type="KEGG" id="hsa:23499"/>
<dbReference type="UCSC" id="uc031pmd.2">
    <molecule id="Q9UPN3-1"/>
    <property type="organism name" value="human"/>
</dbReference>
<dbReference type="AGR" id="HGNC:13664"/>
<dbReference type="CTD" id="23499"/>
<dbReference type="DisGeNET" id="23499"/>
<dbReference type="GeneCards" id="MACF1"/>
<dbReference type="HGNC" id="HGNC:13664">
    <property type="gene designation" value="MACF1"/>
</dbReference>
<dbReference type="HPA" id="ENSG00000127603">
    <property type="expression patterns" value="Low tissue specificity"/>
</dbReference>
<dbReference type="MalaCards" id="MACF1"/>
<dbReference type="MIM" id="608271">
    <property type="type" value="gene"/>
</dbReference>
<dbReference type="MIM" id="618325">
    <property type="type" value="phenotype"/>
</dbReference>
<dbReference type="neXtProt" id="NX_Q9UPN3"/>
<dbReference type="OpenTargets" id="ENSG00000127603"/>
<dbReference type="Orphanet" id="572013">
    <property type="disease" value="Posterior-predominant lissencephaly-broad flat pons and medulla-midline crossing defects syndrome"/>
</dbReference>
<dbReference type="PharmGKB" id="PA30518"/>
<dbReference type="VEuPathDB" id="HostDB:ENSG00000127603"/>
<dbReference type="eggNOG" id="KOG0516">
    <property type="taxonomic scope" value="Eukaryota"/>
</dbReference>
<dbReference type="GeneTree" id="ENSGT00940000155824"/>
<dbReference type="HOGENOM" id="CLU_000015_1_0_1"/>
<dbReference type="InParanoid" id="Q9UPN3"/>
<dbReference type="OrthoDB" id="9478980at2759"/>
<dbReference type="PAN-GO" id="Q9UPN3">
    <property type="GO annotations" value="10 GO annotations based on evolutionary models"/>
</dbReference>
<dbReference type="PhylomeDB" id="Q9UPN3"/>
<dbReference type="TreeFam" id="TF335163"/>
<dbReference type="PathwayCommons" id="Q9UPN3"/>
<dbReference type="SignaLink" id="Q9UPN3"/>
<dbReference type="SIGNOR" id="Q9UPN3"/>
<dbReference type="BioGRID-ORCS" id="23499">
    <property type="hits" value="14 hits in 1153 CRISPR screens"/>
</dbReference>
<dbReference type="CD-CODE" id="3EAB04FE">
    <property type="entry name" value="Rapsn condensate"/>
</dbReference>
<dbReference type="CD-CODE" id="DEE660B4">
    <property type="entry name" value="Stress granule"/>
</dbReference>
<dbReference type="CD-CODE" id="FB4E32DD">
    <property type="entry name" value="Presynaptic clusters and postsynaptic densities"/>
</dbReference>
<dbReference type="ChiTaRS" id="MACF1">
    <property type="organism name" value="human"/>
</dbReference>
<dbReference type="EvolutionaryTrace" id="Q9UPN3"/>
<dbReference type="GeneWiki" id="MACF1"/>
<dbReference type="GenomeRNAi" id="23499"/>
<dbReference type="Pharos" id="Q9UPN3">
    <property type="development level" value="Tbio"/>
</dbReference>
<dbReference type="PRO" id="PR:Q9UPN3"/>
<dbReference type="Proteomes" id="UP000005640">
    <property type="component" value="Chromosome 1"/>
</dbReference>
<dbReference type="RNAct" id="Q9UPN3">
    <property type="molecule type" value="protein"/>
</dbReference>
<dbReference type="Bgee" id="ENSG00000127603">
    <property type="expression patterns" value="Expressed in inferior olivary complex and 212 other cell types or tissues"/>
</dbReference>
<dbReference type="ExpressionAtlas" id="Q9UPN3">
    <property type="expression patterns" value="baseline and differential"/>
</dbReference>
<dbReference type="GO" id="GO:0015629">
    <property type="term" value="C:actin cytoskeleton"/>
    <property type="evidence" value="ECO:0000318"/>
    <property type="project" value="GO_Central"/>
</dbReference>
<dbReference type="GO" id="GO:0005737">
    <property type="term" value="C:cytoplasm"/>
    <property type="evidence" value="ECO:0000314"/>
    <property type="project" value="UniProtKB"/>
</dbReference>
<dbReference type="GO" id="GO:0005856">
    <property type="term" value="C:cytoskeleton"/>
    <property type="evidence" value="ECO:0000303"/>
    <property type="project" value="UniProtKB"/>
</dbReference>
<dbReference type="GO" id="GO:0005794">
    <property type="term" value="C:Golgi apparatus"/>
    <property type="evidence" value="ECO:0000314"/>
    <property type="project" value="UniProtKB"/>
</dbReference>
<dbReference type="GO" id="GO:0016020">
    <property type="term" value="C:membrane"/>
    <property type="evidence" value="ECO:0000318"/>
    <property type="project" value="GO_Central"/>
</dbReference>
<dbReference type="GO" id="GO:0005874">
    <property type="term" value="C:microtubule"/>
    <property type="evidence" value="ECO:0000314"/>
    <property type="project" value="UniProtKB"/>
</dbReference>
<dbReference type="GO" id="GO:0005886">
    <property type="term" value="C:plasma membrane"/>
    <property type="evidence" value="ECO:0000314"/>
    <property type="project" value="UniProtKB"/>
</dbReference>
<dbReference type="GO" id="GO:0032587">
    <property type="term" value="C:ruffle membrane"/>
    <property type="evidence" value="ECO:0000314"/>
    <property type="project" value="UniProtKB"/>
</dbReference>
<dbReference type="GO" id="GO:0003779">
    <property type="term" value="F:actin binding"/>
    <property type="evidence" value="ECO:0000314"/>
    <property type="project" value="UniProtKB"/>
</dbReference>
<dbReference type="GO" id="GO:0051015">
    <property type="term" value="F:actin filament binding"/>
    <property type="evidence" value="ECO:0000314"/>
    <property type="project" value="UniProtKB"/>
</dbReference>
<dbReference type="GO" id="GO:0045296">
    <property type="term" value="F:cadherin binding"/>
    <property type="evidence" value="ECO:0007005"/>
    <property type="project" value="BHF-UCL"/>
</dbReference>
<dbReference type="GO" id="GO:0005509">
    <property type="term" value="F:calcium ion binding"/>
    <property type="evidence" value="ECO:0007669"/>
    <property type="project" value="InterPro"/>
</dbReference>
<dbReference type="GO" id="GO:0051011">
    <property type="term" value="F:microtubule minus-end binding"/>
    <property type="evidence" value="ECO:0000314"/>
    <property type="project" value="UniProtKB"/>
</dbReference>
<dbReference type="GO" id="GO:0003723">
    <property type="term" value="F:RNA binding"/>
    <property type="evidence" value="ECO:0007005"/>
    <property type="project" value="UniProtKB"/>
</dbReference>
<dbReference type="GO" id="GO:0005198">
    <property type="term" value="F:structural molecule activity"/>
    <property type="evidence" value="ECO:0000318"/>
    <property type="project" value="GO_Central"/>
</dbReference>
<dbReference type="GO" id="GO:0043001">
    <property type="term" value="P:Golgi to plasma membrane protein transport"/>
    <property type="evidence" value="ECO:0000314"/>
    <property type="project" value="UniProtKB"/>
</dbReference>
<dbReference type="GO" id="GO:0045104">
    <property type="term" value="P:intermediate filament cytoskeleton organization"/>
    <property type="evidence" value="ECO:0000318"/>
    <property type="project" value="GO_Central"/>
</dbReference>
<dbReference type="GO" id="GO:0045773">
    <property type="term" value="P:positive regulation of axon extension"/>
    <property type="evidence" value="ECO:0000314"/>
    <property type="project" value="UniProtKB"/>
</dbReference>
<dbReference type="GO" id="GO:0030177">
    <property type="term" value="P:positive regulation of Wnt signaling pathway"/>
    <property type="evidence" value="ECO:0000250"/>
    <property type="project" value="UniProtKB"/>
</dbReference>
<dbReference type="GO" id="GO:0030334">
    <property type="term" value="P:regulation of cell migration"/>
    <property type="evidence" value="ECO:0000314"/>
    <property type="project" value="UniProtKB"/>
</dbReference>
<dbReference type="GO" id="GO:0010632">
    <property type="term" value="P:regulation of epithelial cell migration"/>
    <property type="evidence" value="ECO:0000250"/>
    <property type="project" value="UniProtKB"/>
</dbReference>
<dbReference type="GO" id="GO:0051893">
    <property type="term" value="P:regulation of focal adhesion assembly"/>
    <property type="evidence" value="ECO:0000314"/>
    <property type="project" value="UniProtKB"/>
</dbReference>
<dbReference type="GO" id="GO:0032886">
    <property type="term" value="P:regulation of microtubule-based process"/>
    <property type="evidence" value="ECO:0000315"/>
    <property type="project" value="UniProtKB"/>
</dbReference>
<dbReference type="GO" id="GO:0150011">
    <property type="term" value="P:regulation of neuron projection arborization"/>
    <property type="evidence" value="ECO:0000250"/>
    <property type="project" value="UniProtKB"/>
</dbReference>
<dbReference type="GO" id="GO:0016055">
    <property type="term" value="P:Wnt signaling pathway"/>
    <property type="evidence" value="ECO:0007669"/>
    <property type="project" value="UniProtKB-KW"/>
</dbReference>
<dbReference type="GO" id="GO:0042060">
    <property type="term" value="P:wound healing"/>
    <property type="evidence" value="ECO:0000250"/>
    <property type="project" value="UniProtKB"/>
</dbReference>
<dbReference type="CDD" id="cd21240">
    <property type="entry name" value="CH_MACF1_rpt2"/>
    <property type="match status" value="1"/>
</dbReference>
<dbReference type="CDD" id="cd21188">
    <property type="entry name" value="CH_PLEC-like_rpt1"/>
    <property type="match status" value="1"/>
</dbReference>
<dbReference type="CDD" id="cd00051">
    <property type="entry name" value="EFh"/>
    <property type="match status" value="1"/>
</dbReference>
<dbReference type="CDD" id="cd00176">
    <property type="entry name" value="SPEC"/>
    <property type="match status" value="16"/>
</dbReference>
<dbReference type="FunFam" id="1.20.58.60:FF:000009">
    <property type="entry name" value="dystonin isoform X1"/>
    <property type="match status" value="1"/>
</dbReference>
<dbReference type="FunFam" id="1.10.238.10:FF:000013">
    <property type="entry name" value="Microtubule-actin cross-linking factor 1"/>
    <property type="match status" value="1"/>
</dbReference>
<dbReference type="FunFam" id="1.10.418.10:FF:000002">
    <property type="entry name" value="Microtubule-actin cross-linking factor 1"/>
    <property type="match status" value="1"/>
</dbReference>
<dbReference type="FunFam" id="1.10.418.10:FF:000017">
    <property type="entry name" value="Microtubule-actin cross-linking factor 1"/>
    <property type="match status" value="1"/>
</dbReference>
<dbReference type="FunFam" id="1.20.58.60:FF:000001">
    <property type="entry name" value="Microtubule-actin cross-linking factor 1"/>
    <property type="match status" value="3"/>
</dbReference>
<dbReference type="FunFam" id="1.20.58.60:FF:000012">
    <property type="entry name" value="Microtubule-actin cross-linking factor 1"/>
    <property type="match status" value="1"/>
</dbReference>
<dbReference type="FunFam" id="1.20.58.60:FF:000016">
    <property type="entry name" value="Microtubule-actin cross-linking factor 1"/>
    <property type="match status" value="1"/>
</dbReference>
<dbReference type="FunFam" id="1.20.58.60:FF:000021">
    <property type="entry name" value="Microtubule-actin cross-linking factor 1"/>
    <property type="match status" value="1"/>
</dbReference>
<dbReference type="FunFam" id="1.20.58.60:FF:000022">
    <property type="entry name" value="Microtubule-actin cross-linking factor 1"/>
    <property type="match status" value="1"/>
</dbReference>
<dbReference type="FunFam" id="1.20.58.60:FF:000027">
    <property type="entry name" value="Microtubule-actin cross-linking factor 1"/>
    <property type="match status" value="1"/>
</dbReference>
<dbReference type="FunFam" id="1.20.58.60:FF:000031">
    <property type="entry name" value="Microtubule-actin cross-linking factor 1"/>
    <property type="match status" value="1"/>
</dbReference>
<dbReference type="FunFam" id="1.20.58.60:FF:000116">
    <property type="entry name" value="Microtubule-actin cross-linking factor 1"/>
    <property type="match status" value="1"/>
</dbReference>
<dbReference type="FunFam" id="1.20.58.60:FF:000141">
    <property type="entry name" value="Microtubule-actin cross-linking factor 1"/>
    <property type="match status" value="1"/>
</dbReference>
<dbReference type="FunFam" id="1.20.58.60:FF:000342">
    <property type="entry name" value="Microtubule-actin cross-linking factor 1"/>
    <property type="match status" value="1"/>
</dbReference>
<dbReference type="FunFam" id="2.30.30.40:FF:000011">
    <property type="entry name" value="Microtubule-actin cross-linking factor 1"/>
    <property type="match status" value="1"/>
</dbReference>
<dbReference type="FunFam" id="3.30.920.20:FF:000001">
    <property type="entry name" value="Microtubule-actin cross-linking factor 1"/>
    <property type="match status" value="1"/>
</dbReference>
<dbReference type="FunFam" id="3.90.1290.10:FF:000012">
    <property type="entry name" value="Microtubule-actin cross-linking factor 1"/>
    <property type="match status" value="1"/>
</dbReference>
<dbReference type="FunFam" id="1.20.58.60:FF:000008">
    <property type="entry name" value="microtubule-actin cross-linking factor 1"/>
    <property type="match status" value="1"/>
</dbReference>
<dbReference type="FunFam" id="1.20.58.60:FF:000014">
    <property type="entry name" value="microtubule-actin cross-linking factor 1"/>
    <property type="match status" value="1"/>
</dbReference>
<dbReference type="FunFam" id="1.20.58.60:FF:000025">
    <property type="entry name" value="microtubule-actin cross-linking factor 1"/>
    <property type="match status" value="1"/>
</dbReference>
<dbReference type="FunFam" id="3.90.1290.10:FF:000003">
    <property type="entry name" value="microtubule-actin cross-linking factor 1 isoform X1"/>
    <property type="match status" value="1"/>
</dbReference>
<dbReference type="FunFam" id="1.20.58.60:FF:000084">
    <property type="entry name" value="microtubule-actin cross-linking factor 1 isoform X2"/>
    <property type="match status" value="1"/>
</dbReference>
<dbReference type="FunFam" id="1.20.58.60:FF:000087">
    <property type="entry name" value="microtubule-actin cross-linking factor 1 isoform X2"/>
    <property type="match status" value="1"/>
</dbReference>
<dbReference type="FunFam" id="1.20.58.60:FF:000088">
    <property type="entry name" value="microtubule-actin cross-linking factor 1 isoform X2"/>
    <property type="match status" value="1"/>
</dbReference>
<dbReference type="FunFam" id="1.20.58.60:FF:000090">
    <property type="entry name" value="microtubule-actin cross-linking factor 1 isoform X2"/>
    <property type="match status" value="1"/>
</dbReference>
<dbReference type="FunFam" id="1.20.58.60:FF:000092">
    <property type="entry name" value="microtubule-actin cross-linking factor 1 isoform X2"/>
    <property type="match status" value="1"/>
</dbReference>
<dbReference type="FunFam" id="1.20.58.60:FF:000095">
    <property type="entry name" value="microtubule-actin cross-linking factor 1 isoform X2"/>
    <property type="match status" value="1"/>
</dbReference>
<dbReference type="FunFam" id="1.20.58.60:FF:000097">
    <property type="entry name" value="microtubule-actin cross-linking factor 1 isoform X2"/>
    <property type="match status" value="1"/>
</dbReference>
<dbReference type="FunFam" id="1.20.58.60:FF:000048">
    <property type="entry name" value="microtubule-actin cross-linking factor 1 isoform X3"/>
    <property type="match status" value="1"/>
</dbReference>
<dbReference type="FunFam" id="1.20.58.60:FF:000061">
    <property type="entry name" value="microtubule-actin cross-linking factor 1 isoform X3"/>
    <property type="match status" value="1"/>
</dbReference>
<dbReference type="FunFam" id="1.20.58.60:FF:000241">
    <property type="entry name" value="microtubule-actin cross-linking factor 1 isoform X4"/>
    <property type="match status" value="1"/>
</dbReference>
<dbReference type="FunFam" id="3.90.1290.10:FF:000004">
    <property type="entry name" value="microtubule-actin cross-linking factor 1 isoform X4"/>
    <property type="match status" value="1"/>
</dbReference>
<dbReference type="FunFam" id="1.20.58.60:FF:000236">
    <property type="entry name" value="microtubule-actin cross-linking factor 1 isoform X5"/>
    <property type="match status" value="1"/>
</dbReference>
<dbReference type="FunFam" id="3.90.1290.10:FF:000007">
    <property type="entry name" value="microtubule-actin cross-linking factor 1 isoform X6"/>
    <property type="match status" value="1"/>
</dbReference>
<dbReference type="FunFam" id="1.20.58.60:FF:000108">
    <property type="entry name" value="microtubule-actin cross-linking factor 1 isoform X8"/>
    <property type="match status" value="1"/>
</dbReference>
<dbReference type="FunFam" id="1.20.58.60:FF:000089">
    <property type="entry name" value="microtubule-actin cross-linking factor 1 isoform X9"/>
    <property type="match status" value="1"/>
</dbReference>
<dbReference type="FunFam" id="1.20.58.60:FF:000127">
    <property type="entry name" value="microtubule-actin cross-linking factor 1 isoform X9"/>
    <property type="match status" value="1"/>
</dbReference>
<dbReference type="FunFam" id="1.20.58.60:FF:000312">
    <property type="entry name" value="Microtubule-actin crosslinking factor 1"/>
    <property type="match status" value="1"/>
</dbReference>
<dbReference type="FunFam" id="1.20.58.60:FF:000389">
    <property type="entry name" value="Microtubule-actin crosslinking factor 1"/>
    <property type="match status" value="1"/>
</dbReference>
<dbReference type="FunFam" id="3.90.1290.10:FF:000017">
    <property type="entry name" value="Microtubule-actin crosslinking factor 1"/>
    <property type="match status" value="1"/>
</dbReference>
<dbReference type="FunFam" id="1.20.58.60:FF:000010">
    <property type="entry name" value="plectin isoform X2"/>
    <property type="match status" value="1"/>
</dbReference>
<dbReference type="Gene3D" id="1.20.58.1060">
    <property type="match status" value="1"/>
</dbReference>
<dbReference type="Gene3D" id="1.20.58.60">
    <property type="match status" value="31"/>
</dbReference>
<dbReference type="Gene3D" id="1.10.418.10">
    <property type="entry name" value="Calponin-like domain"/>
    <property type="match status" value="2"/>
</dbReference>
<dbReference type="Gene3D" id="1.10.238.10">
    <property type="entry name" value="EF-hand"/>
    <property type="match status" value="1"/>
</dbReference>
<dbReference type="Gene3D" id="3.30.920.20">
    <property type="entry name" value="Gas2-like domain"/>
    <property type="match status" value="1"/>
</dbReference>
<dbReference type="Gene3D" id="3.90.1290.10">
    <property type="entry name" value="Plakin repeat"/>
    <property type="match status" value="5"/>
</dbReference>
<dbReference type="Gene3D" id="2.30.30.40">
    <property type="entry name" value="SH3 Domains"/>
    <property type="match status" value="1"/>
</dbReference>
<dbReference type="InterPro" id="IPR001589">
    <property type="entry name" value="Actinin_actin-bd_CS"/>
</dbReference>
<dbReference type="InterPro" id="IPR001715">
    <property type="entry name" value="CH_dom"/>
</dbReference>
<dbReference type="InterPro" id="IPR036872">
    <property type="entry name" value="CH_dom_sf"/>
</dbReference>
<dbReference type="InterPro" id="IPR041615">
    <property type="entry name" value="Desmoplakin_SH3"/>
</dbReference>
<dbReference type="InterPro" id="IPR041573">
    <property type="entry name" value="Desmoplakin_Spectrin-like"/>
</dbReference>
<dbReference type="InterPro" id="IPR011992">
    <property type="entry name" value="EF-hand-dom_pair"/>
</dbReference>
<dbReference type="InterPro" id="IPR018247">
    <property type="entry name" value="EF_Hand_1_Ca_BS"/>
</dbReference>
<dbReference type="InterPro" id="IPR002048">
    <property type="entry name" value="EF_hand_dom"/>
</dbReference>
<dbReference type="InterPro" id="IPR003108">
    <property type="entry name" value="GAR_dom"/>
</dbReference>
<dbReference type="InterPro" id="IPR036534">
    <property type="entry name" value="GAR_dom_sf"/>
</dbReference>
<dbReference type="InterPro" id="IPR049538">
    <property type="entry name" value="PCN-like_spectrin-like_rpt"/>
</dbReference>
<dbReference type="InterPro" id="IPR043197">
    <property type="entry name" value="Plakin"/>
</dbReference>
<dbReference type="InterPro" id="IPR035915">
    <property type="entry name" value="Plakin_repeat_sf"/>
</dbReference>
<dbReference type="InterPro" id="IPR001101">
    <property type="entry name" value="Plectin_repeat"/>
</dbReference>
<dbReference type="InterPro" id="IPR001452">
    <property type="entry name" value="SH3_domain"/>
</dbReference>
<dbReference type="InterPro" id="IPR018159">
    <property type="entry name" value="Spectrin/alpha-actinin"/>
</dbReference>
<dbReference type="InterPro" id="IPR002017">
    <property type="entry name" value="Spectrin_repeat"/>
</dbReference>
<dbReference type="PANTHER" id="PTHR23169">
    <property type="entry name" value="ENVOPLAKIN"/>
    <property type="match status" value="1"/>
</dbReference>
<dbReference type="PANTHER" id="PTHR23169:SF21">
    <property type="entry name" value="EPIPLAKIN"/>
    <property type="match status" value="1"/>
</dbReference>
<dbReference type="Pfam" id="PF00307">
    <property type="entry name" value="CH"/>
    <property type="match status" value="2"/>
</dbReference>
<dbReference type="Pfam" id="PF13499">
    <property type="entry name" value="EF-hand_7"/>
    <property type="match status" value="1"/>
</dbReference>
<dbReference type="Pfam" id="PF02187">
    <property type="entry name" value="GAS2"/>
    <property type="match status" value="1"/>
</dbReference>
<dbReference type="Pfam" id="PF00681">
    <property type="entry name" value="Plectin"/>
    <property type="match status" value="10"/>
</dbReference>
<dbReference type="Pfam" id="PF17902">
    <property type="entry name" value="SH3_10"/>
    <property type="match status" value="1"/>
</dbReference>
<dbReference type="Pfam" id="PF00435">
    <property type="entry name" value="Spectrin"/>
    <property type="match status" value="17"/>
</dbReference>
<dbReference type="Pfam" id="PF18373">
    <property type="entry name" value="Spectrin_2"/>
    <property type="match status" value="1"/>
</dbReference>
<dbReference type="Pfam" id="PF21019">
    <property type="entry name" value="Spectrin_3"/>
    <property type="match status" value="1"/>
</dbReference>
<dbReference type="Pfam" id="PF21020">
    <property type="entry name" value="Spectrin_4"/>
    <property type="match status" value="1"/>
</dbReference>
<dbReference type="Pfam" id="PF21097">
    <property type="entry name" value="SR_plectin_7"/>
    <property type="match status" value="1"/>
</dbReference>
<dbReference type="SMART" id="SM00033">
    <property type="entry name" value="CH"/>
    <property type="match status" value="2"/>
</dbReference>
<dbReference type="SMART" id="SM01129">
    <property type="entry name" value="DELLA"/>
    <property type="match status" value="1"/>
</dbReference>
<dbReference type="SMART" id="SM00054">
    <property type="entry name" value="EFh"/>
    <property type="match status" value="2"/>
</dbReference>
<dbReference type="SMART" id="SM00243">
    <property type="entry name" value="GAS2"/>
    <property type="match status" value="1"/>
</dbReference>
<dbReference type="SMART" id="SM00250">
    <property type="entry name" value="PLEC"/>
    <property type="match status" value="20"/>
</dbReference>
<dbReference type="SMART" id="SM00150">
    <property type="entry name" value="SPEC"/>
    <property type="match status" value="33"/>
</dbReference>
<dbReference type="SUPFAM" id="SSF47576">
    <property type="entry name" value="Calponin-homology domain, CH-domain"/>
    <property type="match status" value="1"/>
</dbReference>
<dbReference type="SUPFAM" id="SSF47473">
    <property type="entry name" value="EF-hand"/>
    <property type="match status" value="1"/>
</dbReference>
<dbReference type="SUPFAM" id="SSF143575">
    <property type="entry name" value="GAS2 domain-like"/>
    <property type="match status" value="1"/>
</dbReference>
<dbReference type="SUPFAM" id="SSF75399">
    <property type="entry name" value="Plakin repeat"/>
    <property type="match status" value="6"/>
</dbReference>
<dbReference type="SUPFAM" id="SSF46966">
    <property type="entry name" value="Spectrin repeat"/>
    <property type="match status" value="31"/>
</dbReference>
<dbReference type="PROSITE" id="PS00019">
    <property type="entry name" value="ACTININ_1"/>
    <property type="match status" value="1"/>
</dbReference>
<dbReference type="PROSITE" id="PS00020">
    <property type="entry name" value="ACTININ_2"/>
    <property type="match status" value="1"/>
</dbReference>
<dbReference type="PROSITE" id="PS50021">
    <property type="entry name" value="CH"/>
    <property type="match status" value="2"/>
</dbReference>
<dbReference type="PROSITE" id="PS00018">
    <property type="entry name" value="EF_HAND_1"/>
    <property type="match status" value="2"/>
</dbReference>
<dbReference type="PROSITE" id="PS50222">
    <property type="entry name" value="EF_HAND_2"/>
    <property type="match status" value="2"/>
</dbReference>
<dbReference type="PROSITE" id="PS51460">
    <property type="entry name" value="GAR"/>
    <property type="match status" value="1"/>
</dbReference>
<dbReference type="PROSITE" id="PS50002">
    <property type="entry name" value="SH3"/>
    <property type="match status" value="1"/>
</dbReference>